<gene>
    <name evidence="39" type="primary">ABCB11</name>
    <name evidence="35" type="synonym">BSEP</name>
</gene>
<accession>O95342</accession>
<accession>Q53TL2</accession>
<accession>Q9UNB2</accession>
<sequence>MSDSVILRSIKKFGEENDGFESDKSYNNDKKSRLQDEKKGDGVRVGFFQLFRFSSSTDIWLMFVGSLCAFLHGIAQPGVLLIFGTMTDVFIDYDVELQELQIPGKACVNNTIVWTNSSLNQNMTNGTRCGLLNIESEMIKFASYYAGIAVAVLITGYIQICFWVIAAARQIQKMRKFYFRRIMRMEIGWFDCNSVGELNTRFSDDINKINDAIADQMALFIQRMTSTICGFLLGFFRGWKLTLVIISVSPLIGIGAATIGLSVSKFTDYELKAYAKAGVVADEVISSMRTVAAFGGEKREVERYEKNLVFAQRWGIRKGIVMGFFTGFVWCLIFLCYALAFWYGSTLVLDEGEYTPGTLVQIFLSVIVGALNLGNASPCLEAFATGRAAATSIFETIDRKPIIDCMSEDGYKLDRIKGEIEFHNVTFHYPSRPEVKILNDLNMVIKPGEMTALVGPSGAGKSTALQLIQRFYDPCEGMVTVDGHDIRSLNIQWLRDQIGIVEQEPVLFSTTIAENIRYGREDATMEDIVQAAKEANAYNFIMDLPQQFDTLVGEGGGQMSGGQKQRVAIARALIRNPKILLLDMATSALDNESEAMVQEVLSKIQHGHTIISVAHRLSTVRAADTIIGFEHGTAVERGTHEELLERKGVYFTLVTLQSQGNQALNEEDIKDATEDDMLARTFSRGSYQDSLRASIRQRSKSQLSYLVHEPPLAVVDHKSTYEEDRKDKDIPVQEEVEPAPVRRILKFSAPEWPYMLVGSVGAAVNGTVTPLYAFLFSQILGTFSIPDKEEQRSQINGVCLLFVAMGCVSLFTQFLQGYAFAKSGELLTKRLRKFGFRAMLGQDIAWFDDLRNSPGALTTRLATDASQVQGAAGSQIGMIVNSFTNVTVAMIIAFSFSWKLSLVILCFFPFLALSGATQTRMLTGFASRDKQALEMVGQITNEALSNIRTVAGIGKERRFIEALETELEKPFKTAIQKANIYGFCFAFAQCIMFIANSASYRYGGYLISNEGLHFSYVFRVISAVVLSATALGRAFSYTPSYAKAKISAARFFQLLDRQPPISVYNTAGEKWDNFQGKIDFVDCKFTYPSRPDSQVLNGLSVSISPGQTLAFVGSSGCGKSTSIQLLERFYDPDQGKVMIDGHDSKKVNVQFLRSNIGIVSQEPVLFACSIMDNIKYGDNTKEIPMERVIAAAKQAQLHDFVMSLPEKYETNVGSQGSQLSRGEKQRIAIARAIVRDPKILLLDEATSALDTESEKTVQVALDKAREGRTCIVIAHRLSTIQNADIIAVMAQGVVIEKGTHEELMAQKGAYYKLVTTGSPIS</sequence>
<proteinExistence type="evidence at protein level"/>
<keyword id="KW-0002">3D-structure</keyword>
<keyword id="KW-0067">ATP-binding</keyword>
<keyword id="KW-1003">Cell membrane</keyword>
<keyword id="KW-0225">Disease variant</keyword>
<keyword id="KW-0967">Endosome</keyword>
<keyword id="KW-0325">Glycoprotein</keyword>
<keyword id="KW-0988">Intrahepatic cholestasis</keyword>
<keyword id="KW-0445">Lipid transport</keyword>
<keyword id="KW-0472">Membrane</keyword>
<keyword id="KW-0547">Nucleotide-binding</keyword>
<keyword id="KW-0597">Phosphoprotein</keyword>
<keyword id="KW-1267">Proteomics identification</keyword>
<keyword id="KW-1185">Reference proteome</keyword>
<keyword id="KW-0677">Repeat</keyword>
<keyword id="KW-1278">Translocase</keyword>
<keyword id="KW-0812">Transmembrane</keyword>
<keyword id="KW-1133">Transmembrane helix</keyword>
<keyword id="KW-0813">Transport</keyword>
<keyword id="KW-0832">Ubl conjugation</keyword>
<reference key="1">
    <citation type="journal article" date="1998" name="Nat. Genet.">
        <title>A gene encoding a liver-specific ABC transporter is mutated in progressive familial intrahepatic cholestasis.</title>
        <authorList>
            <person name="Strautnieks S.S."/>
            <person name="Bull L.N."/>
            <person name="Knisely A.S."/>
            <person name="Kocoshis S.A."/>
            <person name="Dahl N."/>
            <person name="Arnell H."/>
            <person name="Sokal E.M."/>
            <person name="Dahan K."/>
            <person name="Childs S."/>
            <person name="Ling V."/>
            <person name="Tanner M.S."/>
            <person name="Kagalwalla A.F."/>
            <person name="Nemeth A."/>
            <person name="Pawlowska J."/>
            <person name="Baker A."/>
            <person name="Mieli-Vergani G."/>
            <person name="Freimer N.B."/>
            <person name="Gardiner R.M."/>
            <person name="Thompson R.J."/>
        </authorList>
    </citation>
    <scope>NUCLEOTIDE SEQUENCE [MRNA]</scope>
    <scope>VARIANTS PFIC2 GLY-297; GLU-461; GLY-482; ARG-982; CYS-1153 AND GLN-1268</scope>
</reference>
<reference key="2">
    <citation type="submission" date="1999-03" db="EMBL/GenBank/DDBJ databases">
        <title>Cellular localization and functional characterization of the human bile salt export pump (BSEP).</title>
        <authorList>
            <person name="Mol O."/>
            <person name="Hooiveld G.J.E.J."/>
            <person name="Jansen P.L.M."/>
            <person name="Muller M."/>
        </authorList>
    </citation>
    <scope>NUCLEOTIDE SEQUENCE [MRNA]</scope>
    <scope>VARIANT ALA-444</scope>
</reference>
<reference key="3">
    <citation type="journal article" date="2005" name="Nature">
        <title>Generation and annotation of the DNA sequences of human chromosomes 2 and 4.</title>
        <authorList>
            <person name="Hillier L.W."/>
            <person name="Graves T.A."/>
            <person name="Fulton R.S."/>
            <person name="Fulton L.A."/>
            <person name="Pepin K.H."/>
            <person name="Minx P."/>
            <person name="Wagner-McPherson C."/>
            <person name="Layman D."/>
            <person name="Wylie K."/>
            <person name="Sekhon M."/>
            <person name="Becker M.C."/>
            <person name="Fewell G.A."/>
            <person name="Delehaunty K.D."/>
            <person name="Miner T.L."/>
            <person name="Nash W.E."/>
            <person name="Kremitzki C."/>
            <person name="Oddy L."/>
            <person name="Du H."/>
            <person name="Sun H."/>
            <person name="Bradshaw-Cordum H."/>
            <person name="Ali J."/>
            <person name="Carter J."/>
            <person name="Cordes M."/>
            <person name="Harris A."/>
            <person name="Isak A."/>
            <person name="van Brunt A."/>
            <person name="Nguyen C."/>
            <person name="Du F."/>
            <person name="Courtney L."/>
            <person name="Kalicki J."/>
            <person name="Ozersky P."/>
            <person name="Abbott S."/>
            <person name="Armstrong J."/>
            <person name="Belter E.A."/>
            <person name="Caruso L."/>
            <person name="Cedroni M."/>
            <person name="Cotton M."/>
            <person name="Davidson T."/>
            <person name="Desai A."/>
            <person name="Elliott G."/>
            <person name="Erb T."/>
            <person name="Fronick C."/>
            <person name="Gaige T."/>
            <person name="Haakenson W."/>
            <person name="Haglund K."/>
            <person name="Holmes A."/>
            <person name="Harkins R."/>
            <person name="Kim K."/>
            <person name="Kruchowski S.S."/>
            <person name="Strong C.M."/>
            <person name="Grewal N."/>
            <person name="Goyea E."/>
            <person name="Hou S."/>
            <person name="Levy A."/>
            <person name="Martinka S."/>
            <person name="Mead K."/>
            <person name="McLellan M.D."/>
            <person name="Meyer R."/>
            <person name="Randall-Maher J."/>
            <person name="Tomlinson C."/>
            <person name="Dauphin-Kohlberg S."/>
            <person name="Kozlowicz-Reilly A."/>
            <person name="Shah N."/>
            <person name="Swearengen-Shahid S."/>
            <person name="Snider J."/>
            <person name="Strong J.T."/>
            <person name="Thompson J."/>
            <person name="Yoakum M."/>
            <person name="Leonard S."/>
            <person name="Pearman C."/>
            <person name="Trani L."/>
            <person name="Radionenko M."/>
            <person name="Waligorski J.E."/>
            <person name="Wang C."/>
            <person name="Rock S.M."/>
            <person name="Tin-Wollam A.-M."/>
            <person name="Maupin R."/>
            <person name="Latreille P."/>
            <person name="Wendl M.C."/>
            <person name="Yang S.-P."/>
            <person name="Pohl C."/>
            <person name="Wallis J.W."/>
            <person name="Spieth J."/>
            <person name="Bieri T.A."/>
            <person name="Berkowicz N."/>
            <person name="Nelson J.O."/>
            <person name="Osborne J."/>
            <person name="Ding L."/>
            <person name="Meyer R."/>
            <person name="Sabo A."/>
            <person name="Shotland Y."/>
            <person name="Sinha P."/>
            <person name="Wohldmann P.E."/>
            <person name="Cook L.L."/>
            <person name="Hickenbotham M.T."/>
            <person name="Eldred J."/>
            <person name="Williams D."/>
            <person name="Jones T.A."/>
            <person name="She X."/>
            <person name="Ciccarelli F.D."/>
            <person name="Izaurralde E."/>
            <person name="Taylor J."/>
            <person name="Schmutz J."/>
            <person name="Myers R.M."/>
            <person name="Cox D.R."/>
            <person name="Huang X."/>
            <person name="McPherson J.D."/>
            <person name="Mardis E.R."/>
            <person name="Clifton S.W."/>
            <person name="Warren W.C."/>
            <person name="Chinwalla A.T."/>
            <person name="Eddy S.R."/>
            <person name="Marra M.A."/>
            <person name="Ovcharenko I."/>
            <person name="Furey T.S."/>
            <person name="Miller W."/>
            <person name="Eichler E.E."/>
            <person name="Bork P."/>
            <person name="Suyama M."/>
            <person name="Torrents D."/>
            <person name="Waterston R.H."/>
            <person name="Wilson R.K."/>
        </authorList>
    </citation>
    <scope>NUCLEOTIDE SEQUENCE [LARGE SCALE GENOMIC DNA]</scope>
</reference>
<reference key="4">
    <citation type="journal article" date="2005" name="Biochim. Biophys. Acta">
        <title>Transport by vesicles of glycine- and taurine-conjugated bile salts and taurolithocholate 3-sulfate: a comparison of human BSEP with rat Bsep.</title>
        <authorList>
            <person name="Hayashi H."/>
            <person name="Takada T."/>
            <person name="Suzuki H."/>
            <person name="Onuki R."/>
            <person name="Hofmann A.F."/>
            <person name="Sugiyama Y."/>
        </authorList>
    </citation>
    <scope>CATALYTIC ACTIVITY</scope>
    <scope>BIOPHYSICOCHEMICAL PROPERTIES</scope>
    <scope>FUNCTION</scope>
    <scope>ACTIVITY REGULATION</scope>
</reference>
<reference key="5">
    <citation type="journal article" date="2005" name="J. Pharmacol. Exp. Ther.">
        <title>Bile salt export pump (BSEP/ABCB11) can transport a nonbile acid substrate, pravastatin.</title>
        <authorList>
            <person name="Hirano M."/>
            <person name="Maeda K."/>
            <person name="Hayashi H."/>
            <person name="Kusuhara H."/>
            <person name="Sugiyama Y."/>
        </authorList>
    </citation>
    <scope>CATALYTIC ACTIVITY</scope>
    <scope>FUNCTION</scope>
    <scope>BIOPHYSICOCHEMICAL PROPERTIES</scope>
    <scope>ACTIVITY REGULATION</scope>
</reference>
<reference key="6">
    <citation type="journal article" date="2007" name="Am. J. Physiol.">
        <title>Two N-linked glycans are required to maintain the transport activity of the bile salt export pump (ABCB11) in MDCK II cells.</title>
        <authorList>
            <person name="Mochizuki K."/>
            <person name="Kagawa T."/>
            <person name="Numari A."/>
            <person name="Harris M.J."/>
            <person name="Itoh J."/>
            <person name="Watanabe N."/>
            <person name="Mine T."/>
            <person name="Arias I.M."/>
        </authorList>
    </citation>
    <scope>GLYCOSYLATION AT ASN-109; ASN-116; ASN-122 AND ASN-125</scope>
</reference>
<reference key="7">
    <citation type="journal article" date="2008" name="Biopharm. Drug Dispos.">
        <title>Cloning of the dog bile salt export pump (BSEP; ABCB11) and functional comparison with the human and rat proteins.</title>
        <authorList>
            <person name="Yabuuchi H."/>
            <person name="Tanaka K."/>
            <person name="Maeda M."/>
            <person name="Takemura M."/>
            <person name="Oka M."/>
            <person name="Ohashi R."/>
            <person name="Tamai I."/>
        </authorList>
    </citation>
    <scope>CATALYTIC ACTIVITY</scope>
    <scope>FUNCTION</scope>
    <scope>BIOPHYSICOCHEMICAL PROPERTIES</scope>
    <scope>ACTIVITY REGULATION</scope>
    <source>
        <tissue>Liver</tissue>
    </source>
</reference>
<reference key="8">
    <citation type="journal article" date="2008" name="Mol. Pharmacol.">
        <title>Involvement of multiple efflux transporters in hepatic disposition of fexofenadine.</title>
        <authorList>
            <person name="Matsushima S."/>
            <person name="Maeda K."/>
            <person name="Hayashi H."/>
            <person name="Debori Y."/>
            <person name="Schinkel A.H."/>
            <person name="Schuetz J.D."/>
            <person name="Kusuhara H."/>
            <person name="Sugiyama Y."/>
        </authorList>
    </citation>
    <scope>FUNCTION</scope>
    <scope>CATALYTIC ACTIVITY</scope>
</reference>
<reference key="9">
    <citation type="journal article" date="2009" name="J. Biol. Chem.">
        <title>Activity of the bile salt export pump (ABCB11) is critically dependent on canalicular membrane cholesterol content.</title>
        <authorList>
            <person name="Paulusma C.C."/>
            <person name="de Waart D.R."/>
            <person name="Kunne C."/>
            <person name="Mok K.S."/>
            <person name="Elferink R.P."/>
        </authorList>
    </citation>
    <scope>FUNCTION</scope>
    <scope>ACTIVITY REGULATION</scope>
    <scope>CATALYTIC ACTIVITY</scope>
</reference>
<reference key="10">
    <citation type="journal article" date="2010" name="Biochim. Biophys. Acta">
        <title>Short- and medium-chain fatty acids enhance the cell surface expression and transport capacity of the bile salt export pump (BSEP/ABCB11).</title>
        <authorList>
            <person name="Kato T."/>
            <person name="Hayashi H."/>
            <person name="Sugiyama Y."/>
        </authorList>
    </citation>
    <scope>SUBCELLULAR LOCATION</scope>
    <scope>ACTIVITY REGULATION</scope>
    <scope>CATALYTIC ACTIVITY</scope>
    <scope>FUNCTION</scope>
</reference>
<reference key="11">
    <citation type="journal article" date="2012" name="Hepatology">
        <title>AP2 adaptor complex mediates bile salt export pump internalization and modulates its hepatocanalicular expression and transport function.</title>
        <authorList>
            <person name="Hayashi H."/>
            <person name="Inamura K."/>
            <person name="Aida K."/>
            <person name="Naoi S."/>
            <person name="Horikawa R."/>
            <person name="Nagasaka H."/>
            <person name="Takatani T."/>
            <person name="Fukushima T."/>
            <person name="Hattori A."/>
            <person name="Yabuki T."/>
            <person name="Horii I."/>
            <person name="Sugiyama Y."/>
        </authorList>
    </citation>
    <scope>SUBCELLULAR LOCATION</scope>
    <scope>INTERACTION WITH AP2A2 AND AP2A1</scope>
    <scope>FUNCTION</scope>
    <scope>CATALYTIC ACTIVITY</scope>
    <scope>REGION</scope>
    <scope>MUTAGENESIS OF TYR-1311</scope>
</reference>
<reference key="12">
    <citation type="journal article" date="2014" name="J. Proteomics">
        <title>An enzyme assisted RP-RPLC approach for in-depth analysis of human liver phosphoproteome.</title>
        <authorList>
            <person name="Bian Y."/>
            <person name="Song C."/>
            <person name="Cheng K."/>
            <person name="Dong M."/>
            <person name="Wang F."/>
            <person name="Huang J."/>
            <person name="Sun D."/>
            <person name="Wang L."/>
            <person name="Ye M."/>
            <person name="Zou H."/>
        </authorList>
    </citation>
    <scope>PHOSPHORYLATION [LARGE SCALE ANALYSIS] AT THR-586; SER-587; SER-704 AND SER-1214</scope>
    <scope>IDENTIFICATION BY MASS SPECTROMETRY [LARGE SCALE ANALYSIS]</scope>
    <source>
        <tissue>Liver</tissue>
    </source>
</reference>
<reference evidence="40" key="13">
    <citation type="journal article" date="2020" name="Cell Res.">
        <title>Cryo-EM structure of human bile salts exporter ABCB11.</title>
        <authorList>
            <person name="Wang L."/>
            <person name="Hou W.T."/>
            <person name="Chen L."/>
            <person name="Jiang Y.L."/>
            <person name="Xu D."/>
            <person name="Sun L."/>
            <person name="Zhou C.Z."/>
            <person name="Chen Y."/>
        </authorList>
    </citation>
    <scope>STRUCTURE BY ELECTRON MICROSCOPY (3.50 ANGSTROMS)</scope>
    <scope>CATALYTIC ACTIVITY</scope>
    <scope>FUNCTION</scope>
    <scope>ACTIVITY REGULATION</scope>
    <scope>MUTAGENESIS OF 1-MET--LEU-441</scope>
</reference>
<reference key="14">
    <citation type="journal article" date="1999" name="Gastroenterology">
        <title>Hepatocanalicular bile salt export pump deficiency in patients with progressive familial intrahepatic cholestasis.</title>
        <authorList>
            <person name="Jansen P.L.M."/>
            <person name="Strautnieks S.S."/>
            <person name="Jacquemin E."/>
            <person name="Hadchouel M."/>
            <person name="Sokal E.M."/>
            <person name="Hooiveld G.J.E.J."/>
            <person name="Koning J.H."/>
            <person name="De Jager-Krikken A."/>
            <person name="Kuipers F."/>
            <person name="Stellaard F."/>
            <person name="Bijleveld C.M."/>
            <person name="Gouw A."/>
            <person name="Van Goor H."/>
            <person name="Thompson R.J."/>
            <person name="Muller M."/>
        </authorList>
    </citation>
    <scope>VARIANTS PFIC2 VAL-238 AND SER-336</scope>
</reference>
<reference key="15">
    <citation type="journal article" date="2002" name="J. Hum. Genet.">
        <title>Three hundred twenty-six genetic variations in genes encoding nine members of ATP-binding cassette, subfamily B (ABCB/MDR/TAP), in the Japanese population.</title>
        <authorList>
            <person name="Saito S."/>
            <person name="Iida A."/>
            <person name="Sekine A."/>
            <person name="Miura Y."/>
            <person name="Ogawa C."/>
            <person name="Kawauchi S."/>
            <person name="Higuchi S."/>
            <person name="Nakamura Y."/>
        </authorList>
    </citation>
    <scope>VARIANT ALA-444</scope>
</reference>
<reference key="16">
    <citation type="journal article" date="2002" name="J. Pediatr.">
        <title>FIC1 and BSEP defects in Taiwanese patients with chronic intrahepatic cholestasis with low gamma-glutamyltranspeptidase levels.</title>
        <authorList>
            <person name="Chen H.-L."/>
            <person name="Chang P.-S."/>
            <person name="Hsu H.-C."/>
            <person name="Ni Y.-H."/>
            <person name="Hsu H.-Y."/>
            <person name="Lee J.-H."/>
            <person name="Jeng Y.-M."/>
            <person name="Shau W.-Y."/>
            <person name="Chang M.-H."/>
        </authorList>
    </citation>
    <scope>VARIANTS PFIC2 LEU-284 AND ASP-1004</scope>
</reference>
<reference key="17">
    <citation type="journal article" date="2004" name="Gastroenterology">
        <title>Benign recurrent intrahepatic cholestasis type 2 is caused by mutations in ABCB11.</title>
        <authorList>
            <person name="van Mil S.W.C."/>
            <person name="van der Woerd W.L."/>
            <person name="van der Brugge G."/>
            <person name="Sturm E."/>
            <person name="Jansen P.L.M."/>
            <person name="Bull L.N."/>
            <person name="van den Berg I.E.T."/>
            <person name="Berger R."/>
            <person name="Houwen R.H.J."/>
            <person name="Klomp L.W.J."/>
        </authorList>
    </citation>
    <scope>VARIANTS BRIC2 GLY-186; GLY-297; THR-570; PRO-923; PRO-926; CYS-1050 AND HIS-1128</scope>
</reference>
<reference key="18">
    <citation type="journal article" date="2004" name="Pharmacogenetics">
        <title>Sequence analysis of bile salt export pump (ABCB11) and multidrug resistance p-glycoprotein 3 (ABCB4, MDR3) in patients with intrahepatic cholestasis of pregnancy.</title>
        <authorList>
            <person name="Pauli-Magnus C."/>
            <person name="Lang T."/>
            <person name="Meier Y."/>
            <person name="Zodan-Marin T."/>
            <person name="Jung D."/>
            <person name="Breymann C."/>
            <person name="Zimmermann R."/>
            <person name="Kenngott S."/>
            <person name="Beuers U."/>
            <person name="Reichel C."/>
            <person name="Kerb R."/>
            <person name="Penger A."/>
            <person name="Meier P.J."/>
            <person name="Kullak-Ublick G.A."/>
        </authorList>
    </citation>
    <scope>VARIANTS GLN-415; ALA-444; SER-591 AND VAL-677</scope>
</reference>
<reference key="19">
    <citation type="journal article" date="2005" name="Hepatology">
        <title>Two common PFIC2 mutations are associated with the impaired membrane trafficking of BSEP/ABCB11.</title>
        <authorList>
            <person name="Hayashi H."/>
            <person name="Takada T."/>
            <person name="Suzuki H."/>
            <person name="Akita H."/>
            <person name="Sugiyama Y."/>
        </authorList>
    </citation>
    <scope>CHARACTERIZATION OF VARIANTS PFIC2 GLY-297 AND GLY-482</scope>
    <scope>CATALYTIC ACTIVITY</scope>
    <scope>FUNCTION</scope>
    <scope>SUBCELLULAR LOCATION</scope>
    <scope>BIOPHYSICOCHEMICAL PROPERTIES</scope>
    <scope>GLYCOSYLATION</scope>
</reference>
<reference key="20">
    <citation type="journal article" date="2005" name="J. Hepatol.">
        <title>Impaired expression and function of the bile salt export pump due to three novel ABCB11 mutations in intrahepatic cholestasis.</title>
        <authorList>
            <person name="Noe J."/>
            <person name="Kullak-Ublick G.A."/>
            <person name="Jochum W."/>
            <person name="Stieger B."/>
            <person name="Kerb R."/>
            <person name="Haberl M."/>
            <person name="Muellhaupt B."/>
            <person name="Meier P.J."/>
            <person name="Pauli-Magnus C."/>
        </authorList>
    </citation>
    <scope>VARIANTS BRIC2 GLY-297 AND THR-432</scope>
    <scope>CHARACTERIZATION OF VARIANTS BRIC2 GLY-297 AND THR-432</scope>
</reference>
<reference key="21">
    <citation type="journal article" date="2006" name="Drug Metab. Dispos.">
        <title>Genetic variability, haplotype structures, and ethnic diversity of hepatic transporters MDR3 (ABCB4) and bile salt export pump (ABCB11).</title>
        <authorList>
            <person name="Lang T."/>
            <person name="Haberl M."/>
            <person name="Jung D."/>
            <person name="Drescher A."/>
            <person name="Schlagenhaufer R."/>
            <person name="Keil A."/>
            <person name="Mornhinweg E."/>
            <person name="Stieger B."/>
            <person name="Kullak-Ublick G.A."/>
            <person name="Kerb R."/>
        </authorList>
    </citation>
    <scope>VARIANTS VAL-206; ALA-284; LYS-299; ALA-444; GLY-616; ALA-619; VAL-677; HIS-698; VAL-865 AND GLN-958</scope>
</reference>
<reference key="22">
    <citation type="journal article" date="2006" name="Hepatology">
        <title>Interindividual variability of canalicular ATP-binding-cassette (ABC)-transporter expression in human liver.</title>
        <authorList>
            <person name="Meier Y."/>
            <person name="Pauli-Magnus C."/>
            <person name="Zanger U.M."/>
            <person name="Klein K."/>
            <person name="Schaeffeler E."/>
            <person name="Nussler A.K."/>
            <person name="Nussler N."/>
            <person name="Eichelbaum M."/>
            <person name="Meier P.J."/>
            <person name="Stieger B."/>
        </authorList>
    </citation>
    <scope>VARIANTS ALA-444 AND VAL-677</scope>
</reference>
<reference key="23">
    <citation type="journal article" date="2007" name="Pharmacogenet. Genomics">
        <title>Mutations and polymorphisms in the bile salt export pump and the multidrug resistance protein 3 associated with drug-induced liver injury.</title>
        <authorList>
            <person name="Lang C."/>
            <person name="Meier Y."/>
            <person name="Stieger B."/>
            <person name="Beuers U."/>
            <person name="Lang T."/>
            <person name="Kerb R."/>
            <person name="Kullak-Ublick G.A."/>
            <person name="Meier P.J."/>
            <person name="Pauli-Magnus C."/>
        </authorList>
    </citation>
    <scope>VARIANTS ALA-284; ALA-444; TYR-676; VAL-677; HIS-698 AND ARG-855</scope>
    <scope>BIOPHYSICOCHEMICAL PROPERTIES</scope>
    <scope>CHARACTERIZATION OF VARIANTS ALA-444; TYR-676; VAL-677 AND ARG-855</scope>
</reference>
<reference key="24">
    <citation type="journal article" date="2009" name="Mol. Pharmacol.">
        <title>Short-chain ubiquitination is associated with the degradation rate of a cell-surface-resident bile salt export pump (BSEP/ABCB11).</title>
        <authorList>
            <person name="Hayashi H."/>
            <person name="Sugiyama Y."/>
        </authorList>
    </citation>
    <scope>CHARACTERIZATION OF VARIANT PFIC2 GLY-297</scope>
    <scope>UBIQUITINATION</scope>
</reference>
<reference key="25">
    <citation type="journal article" date="2010" name="Pharmacogenet. Genomics">
        <title>Polymorphic variants in the human bile salt export pump (BSEP; ABCB11): functional characterization and interindividual variability.</title>
        <authorList>
            <person name="Ho R.H."/>
            <person name="Leake B.F."/>
            <person name="Kilkenny D.M."/>
            <person name="Meyer Zu Schwabedissen H.E."/>
            <person name="Glaeser H."/>
            <person name="Kroetz D.L."/>
            <person name="Kim R.B."/>
        </authorList>
    </citation>
    <scope>VARIANTS LEU-56; VAL-206; ALA-444; HIS-558; SER-591; GLN-592; VAL-677 AND LYS-1186</scope>
    <scope>CHARACTERIZATION OF VARIANTS LEU-56; VAL-206; ALA-444; HIS-558; SER-591; GLN-592; VAL-677 AND LYS-1186</scope>
    <scope>VARIANT PFIC2 GLY-297</scope>
    <scope>CHARACTERIZATION OF VARIANTS PFIC2 GLY-297; ARG-982 AND CYS-1153</scope>
    <scope>FUNCTION</scope>
    <scope>CATALYTIC ACTIVITY</scope>
    <scope>SUBCELLULAR LOCATION</scope>
</reference>
<reference key="26">
    <citation type="journal article" date="2014" name="Mol. Med. Report.">
        <title>Diagnosis of ABCB11 gene mutations in children with intrahepatic cholestasis using high resolution melting analysis and direct sequencing.</title>
        <authorList>
            <person name="Hu G."/>
            <person name="He P."/>
            <person name="Liu Z."/>
            <person name="Chen Q."/>
            <person name="Zheng B."/>
            <person name="Zhang Q."/>
        </authorList>
    </citation>
    <scope>VARIANTS PFIC2 HIS-337; CYS-472; TRP-696; PRO-931; VAL-1131 AND ARG-1198</scope>
    <scope>VARIANTS ALA-444 AND VAL-865</scope>
</reference>
<reference key="27">
    <citation type="journal article" date="2014" name="Mol. Pharmacol.">
        <title>Differential effects of membrane cholesterol content on the transport activity of multidrug resistance-associated protein 2 (ABCC2) and of the bile salt export pump (ABCB11).</title>
        <authorList>
            <person name="Guyot C."/>
            <person name="Hofstetter L."/>
            <person name="Stieger B."/>
        </authorList>
    </citation>
    <scope>CHARACTERIZATION OF VARIANTS BRIC2 GLY-297 AND THR-432</scope>
    <scope>CHARACTERIZATION VARIANT ALA-444</scope>
    <scope>FUNCTION</scope>
    <scope>CATALYTIC ACTIVITY</scope>
    <scope>ACTIVITY REGULATION</scope>
</reference>
<reference key="28">
    <citation type="journal article" date="2018" name="J. Hum. Genet.">
        <title>Clinical phenotype and molecular analysis of a homozygous ABCB11 mutation responsible for progressive infantile cholestasis.</title>
        <authorList>
            <person name="Imagawa K."/>
            <person name="Hayashi H."/>
            <person name="Sabu Y."/>
            <person name="Tanikawa K."/>
            <person name="Fujishiro J."/>
            <person name="Kajikawa D."/>
            <person name="Wada H."/>
            <person name="Kudo T."/>
            <person name="Kage M."/>
            <person name="Kusuhara H."/>
            <person name="Sumazaki R."/>
        </authorList>
    </citation>
    <scope>VARIANT PFIC2 TYR-129</scope>
    <scope>CHARACTERIZATION OF VARIANT PFIC2 TYR-129</scope>
    <scope>SUBCELLULAR LOCATION</scope>
    <scope>FUNCTION</scope>
    <scope>CATALYTIC ACTIVITY</scope>
</reference>
<reference key="29">
    <citation type="journal article" date="2019" name="Mol. Med. Report.">
        <title>Functional analysis of the correlation between ABCB11 gene mutation and primary intrahepatic stone.</title>
        <authorList>
            <person name="Gan L."/>
            <person name="Pan S."/>
            <person name="Cui J."/>
            <person name="Bai J."/>
            <person name="Jiang P."/>
            <person name="He Y."/>
        </authorList>
    </citation>
    <scope>VARIANTS LYS-299; ALA-444 AND VAL-865</scope>
    <scope>CHARACTERIZATION OF VARIANT VAL-865</scope>
    <scope>SUBCELLULAR LOCATION</scope>
</reference>
<organism>
    <name type="scientific">Homo sapiens</name>
    <name type="common">Human</name>
    <dbReference type="NCBI Taxonomy" id="9606"/>
    <lineage>
        <taxon>Eukaryota</taxon>
        <taxon>Metazoa</taxon>
        <taxon>Chordata</taxon>
        <taxon>Craniata</taxon>
        <taxon>Vertebrata</taxon>
        <taxon>Euteleostomi</taxon>
        <taxon>Mammalia</taxon>
        <taxon>Eutheria</taxon>
        <taxon>Euarchontoglires</taxon>
        <taxon>Primates</taxon>
        <taxon>Haplorrhini</taxon>
        <taxon>Catarrhini</taxon>
        <taxon>Hominidae</taxon>
        <taxon>Homo</taxon>
    </lineage>
</organism>
<comment type="function">
    <text evidence="13 14 16 21 23 24 25 26 27 28 30 32">Catalyzes the transport of the major hydrophobic bile salts, such as taurine and glycine-conjugated cholic acid across the canalicular membrane of hepatocytes in an ATP-dependent manner, therefore participates in hepatic bile acid homeostasis and consequently to lipid homeostasis through regulation of biliary lipid secretion in a bile salts dependent manner (PubMed:15791618, PubMed:16332456, PubMed:18985798, PubMed:19228692, PubMed:20010382, PubMed:20398791, PubMed:22262466, PubMed:24711118, PubMed:29507376, PubMed:32203132). Transports taurine-conjugated bile salts more rapidly than glycine-conjugated bile salts (PubMed:16332456). Also transports non-bile acid compounds, such as pravastatin and fexofenadine in an ATP-dependent manner and may be involved in their biliary excretion (PubMed:15901796, PubMed:18245269).</text>
</comment>
<comment type="catalytic activity">
    <reaction evidence="16">
        <text>cholate(in) + ATP + H2O = cholate(out) + ADP + phosphate + H(+)</text>
        <dbReference type="Rhea" id="RHEA:50048"/>
        <dbReference type="ChEBI" id="CHEBI:15377"/>
        <dbReference type="ChEBI" id="CHEBI:15378"/>
        <dbReference type="ChEBI" id="CHEBI:29747"/>
        <dbReference type="ChEBI" id="CHEBI:30616"/>
        <dbReference type="ChEBI" id="CHEBI:43474"/>
        <dbReference type="ChEBI" id="CHEBI:456216"/>
    </reaction>
    <physiologicalReaction direction="left-to-right" evidence="16">
        <dbReference type="Rhea" id="RHEA:50049"/>
    </physiologicalReaction>
</comment>
<comment type="catalytic activity">
    <reaction evidence="13 14 16 23 24 25 26 27 28 30 32">
        <text>taurocholate(in) + ATP + H2O = taurocholate(out) + ADP + phosphate + H(+)</text>
        <dbReference type="Rhea" id="RHEA:50052"/>
        <dbReference type="ChEBI" id="CHEBI:15377"/>
        <dbReference type="ChEBI" id="CHEBI:15378"/>
        <dbReference type="ChEBI" id="CHEBI:30616"/>
        <dbReference type="ChEBI" id="CHEBI:36257"/>
        <dbReference type="ChEBI" id="CHEBI:43474"/>
        <dbReference type="ChEBI" id="CHEBI:456216"/>
    </reaction>
    <physiologicalReaction direction="left-to-right" evidence="13 14 16 23 24 25 26 27 28 30 38">
        <dbReference type="Rhea" id="RHEA:50053"/>
    </physiologicalReaction>
</comment>
<comment type="catalytic activity">
    <reaction evidence="13 16 32">
        <text>glycocholate(in) + ATP + H2O = glycocholate(out) + ADP + phosphate + H(+)</text>
        <dbReference type="Rhea" id="RHEA:50056"/>
        <dbReference type="ChEBI" id="CHEBI:15377"/>
        <dbReference type="ChEBI" id="CHEBI:15378"/>
        <dbReference type="ChEBI" id="CHEBI:29746"/>
        <dbReference type="ChEBI" id="CHEBI:30616"/>
        <dbReference type="ChEBI" id="CHEBI:43474"/>
        <dbReference type="ChEBI" id="CHEBI:456216"/>
    </reaction>
    <physiologicalReaction direction="left-to-right" evidence="13 16 38">
        <dbReference type="Rhea" id="RHEA:50057"/>
    </physiologicalReaction>
</comment>
<comment type="catalytic activity">
    <reaction evidence="16">
        <text>glycochenodeoxycholate(in) + ATP + H2O = glycochenodeoxycholate(out) + ADP + phosphate + H(+)</text>
        <dbReference type="Rhea" id="RHEA:50060"/>
        <dbReference type="ChEBI" id="CHEBI:15377"/>
        <dbReference type="ChEBI" id="CHEBI:15378"/>
        <dbReference type="ChEBI" id="CHEBI:30616"/>
        <dbReference type="ChEBI" id="CHEBI:36252"/>
        <dbReference type="ChEBI" id="CHEBI:43474"/>
        <dbReference type="ChEBI" id="CHEBI:456216"/>
    </reaction>
    <physiologicalReaction direction="left-to-right" evidence="16">
        <dbReference type="Rhea" id="RHEA:50061"/>
    </physiologicalReaction>
</comment>
<comment type="catalytic activity">
    <reaction evidence="16">
        <text>taurochenodeoxycholate(in) + ATP + H2O = taurochenodeoxycholate(out) + ADP + phosphate + H(+)</text>
        <dbReference type="Rhea" id="RHEA:50064"/>
        <dbReference type="ChEBI" id="CHEBI:9407"/>
        <dbReference type="ChEBI" id="CHEBI:15377"/>
        <dbReference type="ChEBI" id="CHEBI:15378"/>
        <dbReference type="ChEBI" id="CHEBI:30616"/>
        <dbReference type="ChEBI" id="CHEBI:43474"/>
        <dbReference type="ChEBI" id="CHEBI:456216"/>
    </reaction>
    <physiologicalReaction direction="left-to-right" evidence="16">
        <dbReference type="Rhea" id="RHEA:50065"/>
    </physiologicalReaction>
</comment>
<comment type="catalytic activity">
    <reaction evidence="16">
        <text>glycoursodeoxycholate(in) + ATP + H2O = glycoursodeoxycholate(out) + ADP + phosphate + H(+)</text>
        <dbReference type="Rhea" id="RHEA:50068"/>
        <dbReference type="ChEBI" id="CHEBI:15377"/>
        <dbReference type="ChEBI" id="CHEBI:15378"/>
        <dbReference type="ChEBI" id="CHEBI:30616"/>
        <dbReference type="ChEBI" id="CHEBI:43474"/>
        <dbReference type="ChEBI" id="CHEBI:132030"/>
        <dbReference type="ChEBI" id="CHEBI:456216"/>
    </reaction>
    <physiologicalReaction direction="left-to-right" evidence="16">
        <dbReference type="Rhea" id="RHEA:50069"/>
    </physiologicalReaction>
</comment>
<comment type="catalytic activity">
    <reaction evidence="16 32">
        <text>tauroursodeoxycholate(in) + ATP + H2O = tauroursodeoxycholate(out) + ADP + phosphate + H(+)</text>
        <dbReference type="Rhea" id="RHEA:50072"/>
        <dbReference type="ChEBI" id="CHEBI:15377"/>
        <dbReference type="ChEBI" id="CHEBI:15378"/>
        <dbReference type="ChEBI" id="CHEBI:30616"/>
        <dbReference type="ChEBI" id="CHEBI:43474"/>
        <dbReference type="ChEBI" id="CHEBI:132028"/>
        <dbReference type="ChEBI" id="CHEBI:456216"/>
    </reaction>
    <physiologicalReaction direction="left-to-right" evidence="16 38">
        <dbReference type="Rhea" id="RHEA:50073"/>
    </physiologicalReaction>
</comment>
<comment type="catalytic activity">
    <reaction evidence="16">
        <text>taurodeoxycholate(in) + ATP + H2O = taurodeoxycholate(out) + ADP + phosphate + H(+)</text>
        <dbReference type="Rhea" id="RHEA:50080"/>
        <dbReference type="ChEBI" id="CHEBI:15377"/>
        <dbReference type="ChEBI" id="CHEBI:15378"/>
        <dbReference type="ChEBI" id="CHEBI:30616"/>
        <dbReference type="ChEBI" id="CHEBI:36261"/>
        <dbReference type="ChEBI" id="CHEBI:43474"/>
        <dbReference type="ChEBI" id="CHEBI:456216"/>
    </reaction>
    <physiologicalReaction direction="left-to-right" evidence="16">
        <dbReference type="Rhea" id="RHEA:50081"/>
    </physiologicalReaction>
</comment>
<comment type="catalytic activity">
    <reaction evidence="16">
        <text>taurolithocholate 3-sulfate(in) + ATP + H2O = taurolithocholate 3-sulfate(out) + ADP + phosphate + H(+)</text>
        <dbReference type="Rhea" id="RHEA:50084"/>
        <dbReference type="ChEBI" id="CHEBI:15377"/>
        <dbReference type="ChEBI" id="CHEBI:15378"/>
        <dbReference type="ChEBI" id="CHEBI:30616"/>
        <dbReference type="ChEBI" id="CHEBI:43474"/>
        <dbReference type="ChEBI" id="CHEBI:58301"/>
        <dbReference type="ChEBI" id="CHEBI:456216"/>
    </reaction>
    <physiologicalReaction direction="left-to-right" evidence="16">
        <dbReference type="Rhea" id="RHEA:50085"/>
    </physiologicalReaction>
</comment>
<comment type="catalytic activity">
    <reaction evidence="14">
        <text>pravastatin(in) + ATP + H2O = pravastatin(out) + ADP + phosphate + H(+)</text>
        <dbReference type="Rhea" id="RHEA:63908"/>
        <dbReference type="ChEBI" id="CHEBI:15377"/>
        <dbReference type="ChEBI" id="CHEBI:15378"/>
        <dbReference type="ChEBI" id="CHEBI:30616"/>
        <dbReference type="ChEBI" id="CHEBI:43474"/>
        <dbReference type="ChEBI" id="CHEBI:63660"/>
        <dbReference type="ChEBI" id="CHEBI:456216"/>
    </reaction>
    <physiologicalReaction direction="left-to-right" evidence="37">
        <dbReference type="Rhea" id="RHEA:63909"/>
    </physiologicalReaction>
</comment>
<comment type="activity regulation">
    <text evidence="14 16 23 24 26 28 32">The uptake of taurocholate is inhibited by taurolithocholate sulfate with an IC(50) of 9 uM (PubMed:16332456). Pravastatin competitively inhibits the transport of taurocholic acid (PubMed:15901796, PubMed:18985798). Cyclosporin A, glibenclamide, rifampicin and troglitazonestrongly competitively inhibit the transport activity of taurocholate (PubMed:18985798, PubMed:32203132). The canalicular transport activity of taurocholate is strongly dependent on canalicular membrane cholesterol content (PubMed:19228692). The uptake of taurocholate is increased by short- and medium-chain fatty acids (PubMed:20398791). Cholesterol increases transport capacity of taurocholate without affecting the affinity for the substrate (PubMed:24711118).</text>
</comment>
<comment type="biophysicochemical properties">
    <kinetics>
        <KM evidence="20">30.4 uM for taurocholate</KM>
        <KM evidence="16">6.2 uM for taurocholate</KM>
        <KM evidence="16">21.7 uM for glycocholate</KM>
        <KM evidence="16">6.6 uM for taurochenodeoxycholate</KM>
        <KM evidence="16">7.5 uM for glycochenodeoxycholate</KM>
        <KM evidence="16">9.5 uM for taurolithocholate sulfate</KM>
        <KM evidence="13">4.61 uM for taurocholate</KM>
        <KM evidence="14">4.64 uM for taurocholate</KM>
        <KM evidence="14">124 uM for pravastatin</KM>
        <KM evidence="23">19.9 uM for taurocholate</KM>
        <Vmax evidence="20">232.0 pmol/min/mg enzyme for taurocholate transport</Vmax>
        <Vmax evidence="16">2510.0 pmol/min/mg enzyme for taurocholate transport</Vmax>
        <Vmax evidence="13">2310.0 pmol/min/mg enzyme for taurocholate transport</Vmax>
        <Vmax evidence="14">4290.0 pmol/min/mg enzyme for taurocholate transport</Vmax>
        <Vmax evidence="14">1220.0 pmol/min/mg enzyme for pravastatin transport</Vmax>
        <Vmax evidence="23">98.5 pmol/min/mg enzyme for taurocholate transport</Vmax>
    </kinetics>
</comment>
<comment type="subunit">
    <text evidence="2 27">Interacts with HAX1 (By similarity). Interacts with the adapter protein complex 2 (AP-2) throught AP2A2 or AP2A1; this interaction regulates cell membrane expression of ABCB11 through its internalization in a clathrin-dependent manner and its subsequent degradation (PubMed:22262466).</text>
</comment>
<comment type="interaction">
    <interactant intactId="EBI-3914067">
        <id>O95342</id>
    </interactant>
    <interactant intactId="EBI-742054">
        <id>Q96D03</id>
        <label>DDIT4L</label>
    </interactant>
    <organismsDiffer>false</organismsDiffer>
    <experiments>3</experiments>
</comment>
<comment type="subcellular location">
    <subcellularLocation>
        <location evidence="13 27">Apical cell membrane</location>
        <topology evidence="4">Multi-pass membrane protein</topology>
    </subcellularLocation>
    <subcellularLocation>
        <location evidence="2">Recycling endosome membrane</location>
        <topology evidence="2">Multi-pass membrane protein</topology>
    </subcellularLocation>
    <subcellularLocation>
        <location evidence="2">Endosome</location>
    </subcellularLocation>
    <subcellularLocation>
        <location evidence="25 27 30 31">Cell membrane</location>
        <topology evidence="4">Multi-pass membrane protein</topology>
    </subcellularLocation>
    <text evidence="2 26 27">Internalized at the canalicular membrane through interaction with the adapter protein complex 2 (AP-2) (PubMed:22262466). At steady state, localizes in the canalicular membrane but is also present in recycling endosomes. ABCB11 constantly and rapidly exchanges between the two sites through tubulo-vesicles carriers that move along microtubules. Microtubule-dependent trafficking of ABCB11 is enhanced by taurocholate and cAMP and regulated by STK11 through a PKA-mediated pathway. Trafficking of newly synthesized ABCB11 through endosomal compartment to the bile canalicular membrane is accelerated by cAMP but not by taurocholate (By similarity). Cell membrane expression is up-regulated by short- and medium-chain fatty acids (PubMed:20398791).</text>
</comment>
<comment type="tissue specificity">
    <text>Expressed predominantly, if not exclusively in the liver, where it was further localized to the canalicular microvilli and to subcanalicular vesicles of the hepatocytes by in situ.</text>
</comment>
<comment type="domain">
    <text>Multifunctional polypeptide with two homologous halves, each containing a hydrophobic membrane-anchoring domain and an ATP binding cassette (ABC) domain.</text>
</comment>
<comment type="PTM">
    <text evidence="13 22">N-glycosylated.</text>
</comment>
<comment type="PTM">
    <text evidence="22">Ubiquitinated; short-chain ubiquitination regulates cell-Surface expression of ABCB11.</text>
</comment>
<comment type="disease" evidence="8 9 13 22 25 29 30 33">
    <disease id="DI-00950">
        <name>Cholestasis, progressive familial intrahepatic, 2</name>
        <acronym>PFIC2</acronym>
        <description>A disorder characterized by early onset of cholestasis that progresses to hepatic fibrosis, cirrhosis, and end-stage liver disease before adulthood. PFIC2 inheritance is autosomal recessive.</description>
        <dbReference type="MIM" id="601847"/>
    </disease>
    <text>The disease is caused by variants affecting the gene represented in this entry.</text>
</comment>
<comment type="disease" evidence="12 15 28">
    <disease id="DI-00186">
        <name>Cholestasis, benign recurrent intrahepatic, 2</name>
        <acronym>BRIC2</acronym>
        <description>A disorder characterized by intermittent episodes of cholestasis without progression to liver failure. There is initial elevation of serum bile acids, followed by cholestatic jaundice which generally spontaneously resolves after periods of weeks to months. The cholestatic attacks vary in severity and duration. Patients are asymptomatic between episodes, both clinically and biochemically.</description>
        <dbReference type="MIM" id="605479"/>
    </disease>
    <text>The disease is caused by variants affecting the gene represented in this entry.</text>
</comment>
<comment type="similarity">
    <text evidence="36">Belongs to the ABC transporter superfamily. ABCB family. Multidrug resistance exporter (TC 3.A.1.201) subfamily.</text>
</comment>
<comment type="online information" name="ABCMdb">
    <link uri="http://abcm2.hegelab.org/search"/>
    <text>Database for mutations in ABC proteins</text>
</comment>
<dbReference type="EC" id="7.6.2.-" evidence="13 16 27"/>
<dbReference type="EMBL" id="AF091582">
    <property type="protein sequence ID" value="AAC77455.1"/>
    <property type="molecule type" value="mRNA"/>
</dbReference>
<dbReference type="EMBL" id="AF136523">
    <property type="protein sequence ID" value="AAD28285.1"/>
    <property type="molecule type" value="mRNA"/>
</dbReference>
<dbReference type="EMBL" id="AC008177">
    <property type="protein sequence ID" value="AAY24305.1"/>
    <property type="molecule type" value="Genomic_DNA"/>
</dbReference>
<dbReference type="EMBL" id="AC093723">
    <property type="status" value="NOT_ANNOTATED_CDS"/>
    <property type="molecule type" value="Genomic_DNA"/>
</dbReference>
<dbReference type="EMBL" id="AC069137">
    <property type="status" value="NOT_ANNOTATED_CDS"/>
    <property type="molecule type" value="Genomic_DNA"/>
</dbReference>
<dbReference type="CCDS" id="CCDS46444.1"/>
<dbReference type="RefSeq" id="NP_003733.2">
    <property type="nucleotide sequence ID" value="NM_003742.2"/>
</dbReference>
<dbReference type="PDB" id="6LR0">
    <property type="method" value="EM"/>
    <property type="resolution" value="3.50 A"/>
    <property type="chains" value="U=1-1321"/>
</dbReference>
<dbReference type="PDB" id="7DV5">
    <property type="method" value="EM"/>
    <property type="resolution" value="3.70 A"/>
    <property type="chains" value="U=46-1315"/>
</dbReference>
<dbReference type="PDB" id="7E1A">
    <property type="method" value="EM"/>
    <property type="resolution" value="3.66 A"/>
    <property type="chains" value="U=1-1321"/>
</dbReference>
<dbReference type="PDB" id="8PM6">
    <property type="method" value="EM"/>
    <property type="resolution" value="3.22 A"/>
    <property type="chains" value="A=1-1321"/>
</dbReference>
<dbReference type="PDB" id="8PMD">
    <property type="method" value="EM"/>
    <property type="resolution" value="2.95 A"/>
    <property type="chains" value="A=1-1321"/>
</dbReference>
<dbReference type="PDB" id="8PMJ">
    <property type="method" value="EM"/>
    <property type="resolution" value="2.81 A"/>
    <property type="chains" value="A=1-1321"/>
</dbReference>
<dbReference type="PDBsum" id="6LR0"/>
<dbReference type="PDBsum" id="7DV5"/>
<dbReference type="PDBsum" id="7E1A"/>
<dbReference type="PDBsum" id="8PM6"/>
<dbReference type="PDBsum" id="8PMD"/>
<dbReference type="PDBsum" id="8PMJ"/>
<dbReference type="EMDB" id="EMD-17758"/>
<dbReference type="EMDB" id="EMD-17759"/>
<dbReference type="EMDB" id="EMD-17761"/>
<dbReference type="EMDB" id="EMD-30870"/>
<dbReference type="EMDB" id="EMD-30938"/>
<dbReference type="EMDB" id="EMD-31583"/>
<dbReference type="EMDB" id="EMD-32261"/>
<dbReference type="EMDB" id="EMD-4536"/>
<dbReference type="SMR" id="O95342"/>
<dbReference type="BioGRID" id="114199">
    <property type="interactions" value="10"/>
</dbReference>
<dbReference type="CORUM" id="O95342"/>
<dbReference type="FunCoup" id="O95342">
    <property type="interactions" value="107"/>
</dbReference>
<dbReference type="IntAct" id="O95342">
    <property type="interactions" value="5"/>
</dbReference>
<dbReference type="STRING" id="9606.ENSP00000497931"/>
<dbReference type="BindingDB" id="O95342"/>
<dbReference type="ChEMBL" id="CHEMBL6020"/>
<dbReference type="DrugBank" id="DB01118">
    <property type="generic name" value="Amiodarone"/>
</dbReference>
<dbReference type="DrugBank" id="DB15059">
    <property type="generic name" value="Aprocitentan"/>
</dbReference>
<dbReference type="DrugBank" id="DB00637">
    <property type="generic name" value="Astemizole"/>
</dbReference>
<dbReference type="DrugBank" id="DB01072">
    <property type="generic name" value="Atazanavir"/>
</dbReference>
<dbReference type="DrugBank" id="DB00335">
    <property type="generic name" value="Atenolol"/>
</dbReference>
<dbReference type="DrugBank" id="DB01076">
    <property type="generic name" value="Atorvastatin"/>
</dbReference>
<dbReference type="DrugBank" id="DB00171">
    <property type="generic name" value="ATP"/>
</dbReference>
<dbReference type="DrugBank" id="DB00572">
    <property type="generic name" value="Atropine"/>
</dbReference>
<dbReference type="DrugBank" id="DB15233">
    <property type="generic name" value="Avapritinib"/>
</dbReference>
<dbReference type="DrugBank" id="DB15719">
    <property type="generic name" value="Belantamab mafodotin"/>
</dbReference>
<dbReference type="DrugBank" id="DB12319">
    <property type="generic name" value="Benzbromarone"/>
</dbReference>
<dbReference type="DrugBank" id="DB00559">
    <property type="generic name" value="Bosentan"/>
</dbReference>
<dbReference type="DrugBank" id="DB12151">
    <property type="generic name" value="Brincidofovir"/>
</dbReference>
<dbReference type="DrugBank" id="DB01222">
    <property type="generic name" value="Budesonide"/>
</dbReference>
<dbReference type="DrugBank" id="DB00833">
    <property type="generic name" value="Cefaclor"/>
</dbReference>
<dbReference type="DrugBank" id="DB04918">
    <property type="generic name" value="Ceftobiprole"/>
</dbReference>
<dbReference type="DrugBank" id="DB14733">
    <property type="generic name" value="Ceftobiprole medocaril"/>
</dbReference>
<dbReference type="DrugBank" id="DB00482">
    <property type="generic name" value="Celecoxib"/>
</dbReference>
<dbReference type="DrugBank" id="DB00439">
    <property type="generic name" value="Cerivastatin"/>
</dbReference>
<dbReference type="DrugBank" id="DB00477">
    <property type="generic name" value="Chlorpromazine"/>
</dbReference>
<dbReference type="DrugBank" id="DB02659">
    <property type="generic name" value="Cholic Acid"/>
</dbReference>
<dbReference type="DrugBank" id="DB00501">
    <property type="generic name" value="Cimetidine"/>
</dbReference>
<dbReference type="DrugBank" id="DB01211">
    <property type="generic name" value="Clarithromycin"/>
</dbReference>
<dbReference type="DrugBank" id="DB00257">
    <property type="generic name" value="Clotrimazole"/>
</dbReference>
<dbReference type="DrugBank" id="DB00091">
    <property type="generic name" value="Cyclosporine"/>
</dbReference>
<dbReference type="DrugBank" id="DB03619">
    <property type="generic name" value="Deoxycholic acid"/>
</dbReference>
<dbReference type="DrugBank" id="DB18847">
    <property type="generic name" value="Deuruxolitinib"/>
</dbReference>
<dbReference type="DrugBank" id="DB01234">
    <property type="generic name" value="Dexamethasone"/>
</dbReference>
<dbReference type="DrugBank" id="DB14649">
    <property type="generic name" value="Dexamethasone acetate"/>
</dbReference>
<dbReference type="DrugBank" id="DB00586">
    <property type="generic name" value="Diclofenac"/>
</dbReference>
<dbReference type="DrugBank" id="DB00255">
    <property type="generic name" value="Diethylstilbestrol"/>
</dbReference>
<dbReference type="DrugBank" id="DB00390">
    <property type="generic name" value="Digoxin"/>
</dbReference>
<dbReference type="DrugBank" id="DB13345">
    <property type="generic name" value="Dihydroergocristine"/>
</dbReference>
<dbReference type="DrugBank" id="DB00975">
    <property type="generic name" value="Dipyridamole"/>
</dbReference>
<dbReference type="DrugBank" id="DB00822">
    <property type="generic name" value="Disulfiram"/>
</dbReference>
<dbReference type="DrugBank" id="DB00997">
    <property type="generic name" value="Doxorubicin"/>
</dbReference>
<dbReference type="DrugBank" id="DB00625">
    <property type="generic name" value="Efavirenz"/>
</dbReference>
<dbReference type="DrugBank" id="DB05187">
    <property type="generic name" value="Elafibranor"/>
</dbReference>
<dbReference type="DrugBank" id="DB00199">
    <property type="generic name" value="Erythromycin"/>
</dbReference>
<dbReference type="DrugBank" id="DB00977">
    <property type="generic name" value="Ethinylestradiol"/>
</dbReference>
<dbReference type="DrugBank" id="DB00973">
    <property type="generic name" value="Ezetimibe"/>
</dbReference>
<dbReference type="DrugBank" id="DB01023">
    <property type="generic name" value="Felodipine"/>
</dbReference>
<dbReference type="DrugBank" id="DB01039">
    <property type="generic name" value="Fenofibrate"/>
</dbReference>
<dbReference type="DrugBank" id="DB00301">
    <property type="generic name" value="Flucloxacillin"/>
</dbReference>
<dbReference type="DrugBank" id="DB00693">
    <property type="generic name" value="Fluorescein"/>
</dbReference>
<dbReference type="DrugBank" id="DB00176">
    <property type="generic name" value="Fluvoxamine"/>
</dbReference>
<dbReference type="DrugBank" id="DB02703">
    <property type="generic name" value="Fusidic acid"/>
</dbReference>
<dbReference type="DrugBank" id="DB00222">
    <property type="generic name" value="Glimepiride"/>
</dbReference>
<dbReference type="DrugBank" id="DB01067">
    <property type="generic name" value="Glipizide"/>
</dbReference>
<dbReference type="DrugBank" id="DB01016">
    <property type="generic name" value="Glyburide"/>
</dbReference>
<dbReference type="DrugBank" id="DB02123">
    <property type="generic name" value="Glycochenodeoxycholic Acid"/>
</dbReference>
<dbReference type="DrugBank" id="DB13751">
    <property type="generic name" value="Glycyrrhizic acid"/>
</dbReference>
<dbReference type="DrugBank" id="DB00619">
    <property type="generic name" value="Imatinib"/>
</dbReference>
<dbReference type="DrugBank" id="DB00224">
    <property type="generic name" value="Indinavir"/>
</dbReference>
<dbReference type="DrugBank" id="DB09374">
    <property type="generic name" value="Indocyanine green acid form"/>
</dbReference>
<dbReference type="DrugBank" id="DB00328">
    <property type="generic name" value="Indomethacin"/>
</dbReference>
<dbReference type="DrugBank" id="DB11886">
    <property type="generic name" value="Infigratinib"/>
</dbReference>
<dbReference type="DrugBank" id="DB00270">
    <property type="generic name" value="Isradipine"/>
</dbReference>
<dbReference type="DrugBank" id="DB01026">
    <property type="generic name" value="Ketoconazole"/>
</dbReference>
<dbReference type="DrugBank" id="DB16956">
    <property type="generic name" value="L-Acetylleucine"/>
</dbReference>
<dbReference type="DrugBank" id="DB09078">
    <property type="generic name" value="Lenvatinib"/>
</dbReference>
<dbReference type="DrugBank" id="DB12070">
    <property type="generic name" value="Letermovir"/>
</dbReference>
<dbReference type="DrugBank" id="DB01601">
    <property type="generic name" value="Lopinavir"/>
</dbReference>
<dbReference type="DrugBank" id="DB00455">
    <property type="generic name" value="Loratadine"/>
</dbReference>
<dbReference type="DrugBank" id="DB00678">
    <property type="generic name" value="Losartan"/>
</dbReference>
<dbReference type="DrugBank" id="DB00227">
    <property type="generic name" value="Lovastatin"/>
</dbReference>
<dbReference type="DrugBank" id="DB00834">
    <property type="generic name" value="Mifepristone"/>
</dbReference>
<dbReference type="DrugBank" id="DB00788">
    <property type="generic name" value="Naproxen"/>
</dbReference>
<dbReference type="DrugBank" id="DB01149">
    <property type="generic name" value="Nefazodone"/>
</dbReference>
<dbReference type="DrugBank" id="DB00220">
    <property type="generic name" value="Nelfinavir"/>
</dbReference>
<dbReference type="DrugBank" id="DB00622">
    <property type="generic name" value="Nicardipine"/>
</dbReference>
<dbReference type="DrugBank" id="DB01115">
    <property type="generic name" value="Nifedipine"/>
</dbReference>
<dbReference type="DrugBank" id="DB01054">
    <property type="generic name" value="Nitrendipine"/>
</dbReference>
<dbReference type="DrugBank" id="DB00698">
    <property type="generic name" value="Nitrofurantoin"/>
</dbReference>
<dbReference type="DrugBank" id="DB05990">
    <property type="generic name" value="Obeticholic acid"/>
</dbReference>
<dbReference type="DrugBank" id="DB01165">
    <property type="generic name" value="Ofloxacin"/>
</dbReference>
<dbReference type="DrugBank" id="DB00275">
    <property type="generic name" value="Olmesartan"/>
</dbReference>
<dbReference type="DrugBank" id="DB01229">
    <property type="generic name" value="Paclitaxel"/>
</dbReference>
<dbReference type="DrugBank" id="DB05467">
    <property type="generic name" value="Palovarotene"/>
</dbReference>
<dbReference type="DrugBank" id="DB01174">
    <property type="generic name" value="Phenobarbital"/>
</dbReference>
<dbReference type="DrugBank" id="DB12712">
    <property type="generic name" value="Pilsicainide"/>
</dbReference>
<dbReference type="DrugBank" id="DB08860">
    <property type="generic name" value="Pitavastatin"/>
</dbReference>
<dbReference type="DrugBank" id="DB15822">
    <property type="generic name" value="Pralsetinib"/>
</dbReference>
<dbReference type="DrugBank" id="DB05804">
    <property type="generic name" value="Prasterone sulfate"/>
</dbReference>
<dbReference type="DrugBank" id="DB00175">
    <property type="generic name" value="Pravastatin"/>
</dbReference>
<dbReference type="DrugBank" id="DB00396">
    <property type="generic name" value="Progesterone"/>
</dbReference>
<dbReference type="DrugBank" id="DB00908">
    <property type="generic name" value="Quinidine"/>
</dbReference>
<dbReference type="DrugBank" id="DB00243">
    <property type="generic name" value="Ranolazine"/>
</dbReference>
<dbReference type="DrugBank" id="DB14761">
    <property type="generic name" value="Remdesivir"/>
</dbReference>
<dbReference type="DrugBank" id="DB00912">
    <property type="generic name" value="Repaglinide"/>
</dbReference>
<dbReference type="DrugBank" id="DB00206">
    <property type="generic name" value="Reserpine"/>
</dbReference>
<dbReference type="DrugBank" id="DB12914">
    <property type="generic name" value="Resmetirom"/>
</dbReference>
<dbReference type="DrugBank" id="DB01045">
    <property type="generic name" value="Rifampin"/>
</dbReference>
<dbReference type="DrugBank" id="DB00503">
    <property type="generic name" value="Ritonavir"/>
</dbReference>
<dbReference type="DrugBank" id="DB06176">
    <property type="generic name" value="Romidepsin"/>
</dbReference>
<dbReference type="DrugBank" id="DB00412">
    <property type="generic name" value="Rosiglitazone"/>
</dbReference>
<dbReference type="DrugBank" id="DB01098">
    <property type="generic name" value="Rosuvastatin"/>
</dbReference>
<dbReference type="DrugBank" id="DB01232">
    <property type="generic name" value="Saquinavir"/>
</dbReference>
<dbReference type="DrugBank" id="DB06290">
    <property type="generic name" value="Simeprevir"/>
</dbReference>
<dbReference type="DrugBank" id="DB00641">
    <property type="generic name" value="Simvastatin"/>
</dbReference>
<dbReference type="DrugBank" id="DB00421">
    <property type="generic name" value="Spironolactone"/>
</dbReference>
<dbReference type="DrugBank" id="DB01015">
    <property type="generic name" value="Sulfamethoxazole"/>
</dbReference>
<dbReference type="DrugBank" id="DB01138">
    <property type="generic name" value="Sulfinpyrazone"/>
</dbReference>
<dbReference type="DrugBank" id="DB00675">
    <property type="generic name" value="Tamoxifen"/>
</dbReference>
<dbReference type="DrugBank" id="DB04348">
    <property type="generic name" value="Taurocholic acid"/>
</dbReference>
<dbReference type="DrugBank" id="DB08834">
    <property type="generic name" value="Tauroursodeoxycholic acid"/>
</dbReference>
<dbReference type="DrugBank" id="DB00966">
    <property type="generic name" value="Telmisartan"/>
</dbReference>
<dbReference type="DrugBank" id="DB15133">
    <property type="generic name" value="Tepotinib"/>
</dbReference>
<dbReference type="DrugBank" id="DB00342">
    <property type="generic name" value="Terfenadine"/>
</dbReference>
<dbReference type="DrugBank" id="DB00911">
    <property type="generic name" value="Tinidazole"/>
</dbReference>
<dbReference type="DrugBank" id="DB00932">
    <property type="generic name" value="Tipranavir"/>
</dbReference>
<dbReference type="DrugBank" id="DB00197">
    <property type="generic name" value="Troglitazone"/>
</dbReference>
<dbReference type="DrugBank" id="DB01586">
    <property type="generic name" value="Ursodeoxycholic acid"/>
</dbReference>
<dbReference type="DrugBank" id="DB14057">
    <property type="generic name" value="Valinomycin"/>
</dbReference>
<dbReference type="DrugBank" id="DB00570">
    <property type="generic name" value="Vinblastine"/>
</dbReference>
<dbReference type="DrugBank" id="DB00541">
    <property type="generic name" value="Vincristine"/>
</dbReference>
<dbReference type="DrugCentral" id="O95342"/>
<dbReference type="GuidetoPHARMACOLOGY" id="778"/>
<dbReference type="SwissLipids" id="SLP:000001597"/>
<dbReference type="TCDB" id="3.A.1.201.2">
    <property type="family name" value="the atp-binding cassette (abc) superfamily"/>
</dbReference>
<dbReference type="GlyCosmos" id="O95342">
    <property type="glycosylation" value="4 sites, No reported glycans"/>
</dbReference>
<dbReference type="GlyGen" id="O95342">
    <property type="glycosylation" value="4 sites"/>
</dbReference>
<dbReference type="iPTMnet" id="O95342"/>
<dbReference type="PhosphoSitePlus" id="O95342"/>
<dbReference type="BioMuta" id="ABCB11"/>
<dbReference type="jPOST" id="O95342"/>
<dbReference type="MassIVE" id="O95342"/>
<dbReference type="PaxDb" id="9606-ENSP00000263817"/>
<dbReference type="PeptideAtlas" id="O95342"/>
<dbReference type="ProteomicsDB" id="50810"/>
<dbReference type="Pumba" id="O95342"/>
<dbReference type="Antibodypedia" id="1033">
    <property type="antibodies" value="249 antibodies from 34 providers"/>
</dbReference>
<dbReference type="DNASU" id="8647"/>
<dbReference type="Ensembl" id="ENST00000650372.1">
    <property type="protein sequence ID" value="ENSP00000497931.1"/>
    <property type="gene ID" value="ENSG00000073734.10"/>
</dbReference>
<dbReference type="GeneID" id="8647"/>
<dbReference type="KEGG" id="hsa:8647"/>
<dbReference type="MANE-Select" id="ENST00000650372.1">
    <property type="protein sequence ID" value="ENSP00000497931.1"/>
    <property type="RefSeq nucleotide sequence ID" value="NM_003742.4"/>
    <property type="RefSeq protein sequence ID" value="NP_003733.2"/>
</dbReference>
<dbReference type="UCSC" id="uc002ueo.2">
    <property type="organism name" value="human"/>
</dbReference>
<dbReference type="AGR" id="HGNC:42"/>
<dbReference type="CTD" id="8647"/>
<dbReference type="DisGeNET" id="8647"/>
<dbReference type="GeneCards" id="ABCB11"/>
<dbReference type="HGNC" id="HGNC:42">
    <property type="gene designation" value="ABCB11"/>
</dbReference>
<dbReference type="HPA" id="ENSG00000073734">
    <property type="expression patterns" value="Tissue enriched (liver)"/>
</dbReference>
<dbReference type="MalaCards" id="ABCB11"/>
<dbReference type="MIM" id="601847">
    <property type="type" value="phenotype"/>
</dbReference>
<dbReference type="MIM" id="603201">
    <property type="type" value="gene"/>
</dbReference>
<dbReference type="MIM" id="605479">
    <property type="type" value="phenotype"/>
</dbReference>
<dbReference type="neXtProt" id="NX_O95342"/>
<dbReference type="OpenTargets" id="ENSG00000073734"/>
<dbReference type="Orphanet" id="99961">
    <property type="disease" value="Benign recurrent intrahepatic cholestasis type 2"/>
</dbReference>
<dbReference type="Orphanet" id="69665">
    <property type="disease" value="Intrahepatic cholestasis of pregnancy"/>
</dbReference>
<dbReference type="Orphanet" id="79304">
    <property type="disease" value="Progressive familial intrahepatic cholestasis type 2"/>
</dbReference>
<dbReference type="PharmGKB" id="PA374"/>
<dbReference type="VEuPathDB" id="HostDB:ENSG00000073734"/>
<dbReference type="eggNOG" id="KOG0055">
    <property type="taxonomic scope" value="Eukaryota"/>
</dbReference>
<dbReference type="GeneTree" id="ENSGT00940000157564"/>
<dbReference type="HOGENOM" id="CLU_000604_17_2_1"/>
<dbReference type="InParanoid" id="O95342"/>
<dbReference type="OMA" id="GFGQEEQ"/>
<dbReference type="OrthoDB" id="6500128at2759"/>
<dbReference type="PAN-GO" id="O95342">
    <property type="GO annotations" value="5 GO annotations based on evolutionary models"/>
</dbReference>
<dbReference type="PhylomeDB" id="O95342"/>
<dbReference type="TreeFam" id="TF105193"/>
<dbReference type="PathwayCommons" id="O95342"/>
<dbReference type="Reactome" id="R-HSA-159418">
    <property type="pathway name" value="Recycling of bile acids and salts"/>
</dbReference>
<dbReference type="Reactome" id="R-HSA-193368">
    <property type="pathway name" value="Synthesis of bile acids and bile salts via 7alpha-hydroxycholesterol"/>
</dbReference>
<dbReference type="Reactome" id="R-HSA-5678520">
    <property type="pathway name" value="Defective ABCB11 causes PFIC2 and BRIC2"/>
</dbReference>
<dbReference type="SignaLink" id="O95342"/>
<dbReference type="BioGRID-ORCS" id="8647">
    <property type="hits" value="8 hits in 1148 CRISPR screens"/>
</dbReference>
<dbReference type="ChiTaRS" id="ABCB11">
    <property type="organism name" value="human"/>
</dbReference>
<dbReference type="GeneWiki" id="ABCB11"/>
<dbReference type="GenomeRNAi" id="8647"/>
<dbReference type="Pharos" id="O95342">
    <property type="development level" value="Tchem"/>
</dbReference>
<dbReference type="PRO" id="PR:O95342"/>
<dbReference type="Proteomes" id="UP000005640">
    <property type="component" value="Chromosome 2"/>
</dbReference>
<dbReference type="RNAct" id="O95342">
    <property type="molecule type" value="protein"/>
</dbReference>
<dbReference type="Bgee" id="ENSG00000073734">
    <property type="expression patterns" value="Expressed in right lobe of liver and 97 other cell types or tissues"/>
</dbReference>
<dbReference type="ExpressionAtlas" id="O95342">
    <property type="expression patterns" value="baseline and differential"/>
</dbReference>
<dbReference type="GO" id="GO:0016324">
    <property type="term" value="C:apical plasma membrane"/>
    <property type="evidence" value="ECO:0000315"/>
    <property type="project" value="UniProtKB"/>
</dbReference>
<dbReference type="GO" id="GO:0009986">
    <property type="term" value="C:cell surface"/>
    <property type="evidence" value="ECO:0000315"/>
    <property type="project" value="UniProtKB"/>
</dbReference>
<dbReference type="GO" id="GO:0005768">
    <property type="term" value="C:endosome"/>
    <property type="evidence" value="ECO:0000250"/>
    <property type="project" value="UniProtKB"/>
</dbReference>
<dbReference type="GO" id="GO:0070062">
    <property type="term" value="C:extracellular exosome"/>
    <property type="evidence" value="ECO:0007005"/>
    <property type="project" value="UniProtKB"/>
</dbReference>
<dbReference type="GO" id="GO:0046581">
    <property type="term" value="C:intercellular canaliculus"/>
    <property type="evidence" value="ECO:0007669"/>
    <property type="project" value="Ensembl"/>
</dbReference>
<dbReference type="GO" id="GO:0046691">
    <property type="term" value="C:intracellular canaliculus"/>
    <property type="evidence" value="ECO:0000250"/>
    <property type="project" value="UniProtKB"/>
</dbReference>
<dbReference type="GO" id="GO:0005886">
    <property type="term" value="C:plasma membrane"/>
    <property type="evidence" value="ECO:0000314"/>
    <property type="project" value="UniProtKB"/>
</dbReference>
<dbReference type="GO" id="GO:0055037">
    <property type="term" value="C:recycling endosome"/>
    <property type="evidence" value="ECO:0000250"/>
    <property type="project" value="UniProtKB"/>
</dbReference>
<dbReference type="GO" id="GO:0055038">
    <property type="term" value="C:recycling endosome membrane"/>
    <property type="evidence" value="ECO:0000250"/>
    <property type="project" value="UniProtKB"/>
</dbReference>
<dbReference type="GO" id="GO:0015432">
    <property type="term" value="F:ABC-type bile acid transporter activity"/>
    <property type="evidence" value="ECO:0000314"/>
    <property type="project" value="UniProtKB"/>
</dbReference>
<dbReference type="GO" id="GO:0008559">
    <property type="term" value="F:ABC-type xenobiotic transporter activity"/>
    <property type="evidence" value="ECO:0000315"/>
    <property type="project" value="UniProtKB"/>
</dbReference>
<dbReference type="GO" id="GO:0005524">
    <property type="term" value="F:ATP binding"/>
    <property type="evidence" value="ECO:0007669"/>
    <property type="project" value="UniProtKB-KW"/>
</dbReference>
<dbReference type="GO" id="GO:0016887">
    <property type="term" value="F:ATP hydrolysis activity"/>
    <property type="evidence" value="ECO:0007669"/>
    <property type="project" value="InterPro"/>
</dbReference>
<dbReference type="GO" id="GO:0015125">
    <property type="term" value="F:bile acid transmembrane transporter activity"/>
    <property type="evidence" value="ECO:0000315"/>
    <property type="project" value="UniProtKB"/>
</dbReference>
<dbReference type="GO" id="GO:0015126">
    <property type="term" value="F:canalicular bile acid transmembrane transporter activity"/>
    <property type="evidence" value="ECO:0000314"/>
    <property type="project" value="UniProtKB"/>
</dbReference>
<dbReference type="GO" id="GO:0015721">
    <property type="term" value="P:bile acid and bile salt transport"/>
    <property type="evidence" value="ECO:0000314"/>
    <property type="project" value="UniProtKB"/>
</dbReference>
<dbReference type="GO" id="GO:0006699">
    <property type="term" value="P:bile acid biosynthetic process"/>
    <property type="evidence" value="ECO:0000304"/>
    <property type="project" value="Reactome"/>
</dbReference>
<dbReference type="GO" id="GO:0008206">
    <property type="term" value="P:bile acid metabolic process"/>
    <property type="evidence" value="ECO:0000314"/>
    <property type="project" value="UniProtKB"/>
</dbReference>
<dbReference type="GO" id="GO:0015722">
    <property type="term" value="P:canalicular bile acid transport"/>
    <property type="evidence" value="ECO:0000314"/>
    <property type="project" value="UniProtKB"/>
</dbReference>
<dbReference type="GO" id="GO:0042632">
    <property type="term" value="P:cholesterol homeostasis"/>
    <property type="evidence" value="ECO:0000250"/>
    <property type="project" value="UniProtKB"/>
</dbReference>
<dbReference type="GO" id="GO:0006631">
    <property type="term" value="P:fatty acid metabolic process"/>
    <property type="evidence" value="ECO:0000250"/>
    <property type="project" value="UniProtKB"/>
</dbReference>
<dbReference type="GO" id="GO:0055088">
    <property type="term" value="P:lipid homeostasis"/>
    <property type="evidence" value="ECO:0000250"/>
    <property type="project" value="UniProtKB"/>
</dbReference>
<dbReference type="GO" id="GO:0055091">
    <property type="term" value="P:phospholipid homeostasis"/>
    <property type="evidence" value="ECO:0000250"/>
    <property type="project" value="UniProtKB"/>
</dbReference>
<dbReference type="GO" id="GO:0120189">
    <property type="term" value="P:positive regulation of bile acid secretion"/>
    <property type="evidence" value="ECO:0000250"/>
    <property type="project" value="UniProtKB"/>
</dbReference>
<dbReference type="GO" id="GO:0016567">
    <property type="term" value="P:protein ubiquitination"/>
    <property type="evidence" value="ECO:0000315"/>
    <property type="project" value="UniProtKB"/>
</dbReference>
<dbReference type="GO" id="GO:1904251">
    <property type="term" value="P:regulation of bile acid metabolic process"/>
    <property type="evidence" value="ECO:0000250"/>
    <property type="project" value="UniProtKB"/>
</dbReference>
<dbReference type="GO" id="GO:0031998">
    <property type="term" value="P:regulation of fatty acid beta-oxidation"/>
    <property type="evidence" value="ECO:0000250"/>
    <property type="project" value="UniProtKB"/>
</dbReference>
<dbReference type="GO" id="GO:0055085">
    <property type="term" value="P:transmembrane transport"/>
    <property type="evidence" value="ECO:0000318"/>
    <property type="project" value="GO_Central"/>
</dbReference>
<dbReference type="GO" id="GO:0046618">
    <property type="term" value="P:xenobiotic export from cell"/>
    <property type="evidence" value="ECO:0000315"/>
    <property type="project" value="UniProtKB"/>
</dbReference>
<dbReference type="GO" id="GO:0006805">
    <property type="term" value="P:xenobiotic metabolic process"/>
    <property type="evidence" value="ECO:0000315"/>
    <property type="project" value="UniProtKB"/>
</dbReference>
<dbReference type="GO" id="GO:0006855">
    <property type="term" value="P:xenobiotic transmembrane transport"/>
    <property type="evidence" value="ECO:0000315"/>
    <property type="project" value="UniProtKB"/>
</dbReference>
<dbReference type="CDD" id="cd18577">
    <property type="entry name" value="ABC_6TM_Pgp_ABCB1_D1_like"/>
    <property type="match status" value="1"/>
</dbReference>
<dbReference type="CDD" id="cd18578">
    <property type="entry name" value="ABC_6TM_Pgp_ABCB1_D2_like"/>
    <property type="match status" value="1"/>
</dbReference>
<dbReference type="CDD" id="cd03249">
    <property type="entry name" value="ABC_MTABC3_MDL1_MDL2"/>
    <property type="match status" value="2"/>
</dbReference>
<dbReference type="FunFam" id="1.20.1560.10:FF:000018">
    <property type="entry name" value="ATP-binding cassette subfamily B member 11"/>
    <property type="match status" value="1"/>
</dbReference>
<dbReference type="FunFam" id="1.20.1560.10:FF:000046">
    <property type="entry name" value="ATP-binding cassette subfamily B member 11"/>
    <property type="match status" value="1"/>
</dbReference>
<dbReference type="FunFam" id="1.20.1560.10:FF:000051">
    <property type="entry name" value="ATP-binding cassette subfamily B member 11"/>
    <property type="match status" value="1"/>
</dbReference>
<dbReference type="FunFam" id="3.40.50.300:FF:000479">
    <property type="entry name" value="Multidrug resistance protein 1A"/>
    <property type="match status" value="2"/>
</dbReference>
<dbReference type="Gene3D" id="1.20.1560.10">
    <property type="entry name" value="ABC transporter type 1, transmembrane domain"/>
    <property type="match status" value="1"/>
</dbReference>
<dbReference type="Gene3D" id="3.40.50.300">
    <property type="entry name" value="P-loop containing nucleotide triphosphate hydrolases"/>
    <property type="match status" value="2"/>
</dbReference>
<dbReference type="InterPro" id="IPR003593">
    <property type="entry name" value="AAA+_ATPase"/>
</dbReference>
<dbReference type="InterPro" id="IPR011527">
    <property type="entry name" value="ABC1_TM_dom"/>
</dbReference>
<dbReference type="InterPro" id="IPR036640">
    <property type="entry name" value="ABC1_TM_sf"/>
</dbReference>
<dbReference type="InterPro" id="IPR003439">
    <property type="entry name" value="ABC_transporter-like_ATP-bd"/>
</dbReference>
<dbReference type="InterPro" id="IPR017871">
    <property type="entry name" value="ABC_transporter-like_CS"/>
</dbReference>
<dbReference type="InterPro" id="IPR027417">
    <property type="entry name" value="P-loop_NTPase"/>
</dbReference>
<dbReference type="InterPro" id="IPR039421">
    <property type="entry name" value="Type_1_exporter"/>
</dbReference>
<dbReference type="PANTHER" id="PTHR43394:SF23">
    <property type="entry name" value="ATP-BINDING CASSETTE SUBFAMILY B MEMBER 11, GENE 2"/>
    <property type="match status" value="1"/>
</dbReference>
<dbReference type="PANTHER" id="PTHR43394">
    <property type="entry name" value="ATP-DEPENDENT PERMEASE MDL1, MITOCHONDRIAL"/>
    <property type="match status" value="1"/>
</dbReference>
<dbReference type="Pfam" id="PF00664">
    <property type="entry name" value="ABC_membrane"/>
    <property type="match status" value="2"/>
</dbReference>
<dbReference type="Pfam" id="PF00005">
    <property type="entry name" value="ABC_tran"/>
    <property type="match status" value="2"/>
</dbReference>
<dbReference type="SMART" id="SM00382">
    <property type="entry name" value="AAA"/>
    <property type="match status" value="2"/>
</dbReference>
<dbReference type="SUPFAM" id="SSF90123">
    <property type="entry name" value="ABC transporter transmembrane region"/>
    <property type="match status" value="2"/>
</dbReference>
<dbReference type="SUPFAM" id="SSF52540">
    <property type="entry name" value="P-loop containing nucleoside triphosphate hydrolases"/>
    <property type="match status" value="2"/>
</dbReference>
<dbReference type="PROSITE" id="PS50929">
    <property type="entry name" value="ABC_TM1F"/>
    <property type="match status" value="2"/>
</dbReference>
<dbReference type="PROSITE" id="PS00211">
    <property type="entry name" value="ABC_TRANSPORTER_1"/>
    <property type="match status" value="1"/>
</dbReference>
<dbReference type="PROSITE" id="PS50893">
    <property type="entry name" value="ABC_TRANSPORTER_2"/>
    <property type="match status" value="2"/>
</dbReference>
<name>ABCBB_HUMAN</name>
<evidence type="ECO:0000250" key="1"/>
<evidence type="ECO:0000250" key="2">
    <source>
        <dbReference type="UniProtKB" id="O70127"/>
    </source>
</evidence>
<evidence type="ECO:0000250" key="3">
    <source>
        <dbReference type="UniProtKB" id="Q9QY30"/>
    </source>
</evidence>
<evidence type="ECO:0000255" key="4"/>
<evidence type="ECO:0000255" key="5">
    <source>
        <dbReference type="PROSITE-ProRule" id="PRU00434"/>
    </source>
</evidence>
<evidence type="ECO:0000255" key="6">
    <source>
        <dbReference type="PROSITE-ProRule" id="PRU00441"/>
    </source>
</evidence>
<evidence type="ECO:0000256" key="7">
    <source>
        <dbReference type="SAM" id="MobiDB-lite"/>
    </source>
</evidence>
<evidence type="ECO:0000269" key="8">
    <source>
    </source>
</evidence>
<evidence type="ECO:0000269" key="9">
    <source>
    </source>
</evidence>
<evidence type="ECO:0000269" key="10">
    <source>
    </source>
</evidence>
<evidence type="ECO:0000269" key="11">
    <source>
    </source>
</evidence>
<evidence type="ECO:0000269" key="12">
    <source>
    </source>
</evidence>
<evidence type="ECO:0000269" key="13">
    <source>
    </source>
</evidence>
<evidence type="ECO:0000269" key="14">
    <source>
    </source>
</evidence>
<evidence type="ECO:0000269" key="15">
    <source>
    </source>
</evidence>
<evidence type="ECO:0000269" key="16">
    <source>
    </source>
</evidence>
<evidence type="ECO:0000269" key="17">
    <source>
    </source>
</evidence>
<evidence type="ECO:0000269" key="18">
    <source>
    </source>
</evidence>
<evidence type="ECO:0000269" key="19">
    <source>
    </source>
</evidence>
<evidence type="ECO:0000269" key="20">
    <source>
    </source>
</evidence>
<evidence type="ECO:0000269" key="21">
    <source>
    </source>
</evidence>
<evidence type="ECO:0000269" key="22">
    <source>
    </source>
</evidence>
<evidence type="ECO:0000269" key="23">
    <source>
    </source>
</evidence>
<evidence type="ECO:0000269" key="24">
    <source>
    </source>
</evidence>
<evidence type="ECO:0000269" key="25">
    <source>
    </source>
</evidence>
<evidence type="ECO:0000269" key="26">
    <source>
    </source>
</evidence>
<evidence type="ECO:0000269" key="27">
    <source>
    </source>
</evidence>
<evidence type="ECO:0000269" key="28">
    <source>
    </source>
</evidence>
<evidence type="ECO:0000269" key="29">
    <source>
    </source>
</evidence>
<evidence type="ECO:0000269" key="30">
    <source>
    </source>
</evidence>
<evidence type="ECO:0000269" key="31">
    <source>
    </source>
</evidence>
<evidence type="ECO:0000269" key="32">
    <source>
    </source>
</evidence>
<evidence type="ECO:0000269" key="33">
    <source>
    </source>
</evidence>
<evidence type="ECO:0000269" key="34">
    <source ref="2"/>
</evidence>
<evidence type="ECO:0000303" key="35">
    <source ref="2"/>
</evidence>
<evidence type="ECO:0000305" key="36"/>
<evidence type="ECO:0000305" key="37">
    <source>
    </source>
</evidence>
<evidence type="ECO:0000305" key="38">
    <source>
    </source>
</evidence>
<evidence type="ECO:0000312" key="39">
    <source>
        <dbReference type="HGNC" id="HGNC:42"/>
    </source>
</evidence>
<evidence type="ECO:0007744" key="40">
    <source>
        <dbReference type="PDB" id="6LR0"/>
    </source>
</evidence>
<evidence type="ECO:0007744" key="41">
    <source>
    </source>
</evidence>
<evidence type="ECO:0007829" key="42">
    <source>
        <dbReference type="PDB" id="6LR0"/>
    </source>
</evidence>
<evidence type="ECO:0007829" key="43">
    <source>
        <dbReference type="PDB" id="8PM6"/>
    </source>
</evidence>
<evidence type="ECO:0007829" key="44">
    <source>
        <dbReference type="PDB" id="8PMD"/>
    </source>
</evidence>
<protein>
    <recommendedName>
        <fullName evidence="35">Bile salt export pump</fullName>
        <ecNumber evidence="13 16 27">7.6.2.-</ecNumber>
    </recommendedName>
    <alternativeName>
        <fullName>ATP-binding cassette sub-family B member 11</fullName>
    </alternativeName>
</protein>
<feature type="chain" id="PRO_0000093296" description="Bile salt export pump">
    <location>
        <begin position="1"/>
        <end position="1321"/>
    </location>
</feature>
<feature type="topological domain" description="Cytoplasmic" evidence="4">
    <location>
        <begin position="1"/>
        <end position="62"/>
    </location>
</feature>
<feature type="transmembrane region" description="Helical" evidence="6">
    <location>
        <begin position="63"/>
        <end position="83"/>
    </location>
</feature>
<feature type="topological domain" description="Extracellular" evidence="4">
    <location>
        <begin position="84"/>
        <end position="147"/>
    </location>
</feature>
<feature type="transmembrane region" description="Helical" evidence="6">
    <location>
        <begin position="148"/>
        <end position="168"/>
    </location>
</feature>
<feature type="topological domain" description="Cytoplasmic" evidence="4">
    <location>
        <begin position="169"/>
        <end position="215"/>
    </location>
</feature>
<feature type="transmembrane region" description="Helical" evidence="6">
    <location>
        <begin position="216"/>
        <end position="236"/>
    </location>
</feature>
<feature type="topological domain" description="Extracellular" evidence="4">
    <location>
        <begin position="237"/>
        <end position="240"/>
    </location>
</feature>
<feature type="transmembrane region" description="Helical" evidence="6">
    <location>
        <begin position="241"/>
        <end position="261"/>
    </location>
</feature>
<feature type="topological domain" description="Cytoplasmic" evidence="4">
    <location>
        <begin position="262"/>
        <end position="319"/>
    </location>
</feature>
<feature type="transmembrane region" description="Helical" evidence="6">
    <location>
        <begin position="320"/>
        <end position="340"/>
    </location>
</feature>
<feature type="topological domain" description="Extracellular" evidence="4">
    <location>
        <begin position="341"/>
        <end position="353"/>
    </location>
</feature>
<feature type="transmembrane region" description="Helical" evidence="6">
    <location>
        <begin position="354"/>
        <end position="374"/>
    </location>
</feature>
<feature type="topological domain" description="Cytoplasmic" evidence="4">
    <location>
        <begin position="375"/>
        <end position="755"/>
    </location>
</feature>
<feature type="transmembrane region" description="Helical" evidence="6">
    <location>
        <begin position="756"/>
        <end position="776"/>
    </location>
</feature>
<feature type="topological domain" description="Extracellular" evidence="4">
    <location>
        <begin position="777"/>
        <end position="794"/>
    </location>
</feature>
<feature type="transmembrane region" description="Helical" evidence="6">
    <location>
        <begin position="795"/>
        <end position="815"/>
    </location>
</feature>
<feature type="topological domain" description="Cytoplasmic" evidence="4">
    <location>
        <begin position="816"/>
        <end position="869"/>
    </location>
</feature>
<feature type="transmembrane region" description="Helical" evidence="6">
    <location>
        <begin position="870"/>
        <end position="890"/>
    </location>
</feature>
<feature type="transmembrane region" description="Helical" evidence="6">
    <location>
        <begin position="891"/>
        <end position="911"/>
    </location>
</feature>
<feature type="topological domain" description="Cytoplasmic" evidence="4">
    <location>
        <begin position="912"/>
        <end position="979"/>
    </location>
</feature>
<feature type="transmembrane region" description="Helical" evidence="6">
    <location>
        <begin position="980"/>
        <end position="1000"/>
    </location>
</feature>
<feature type="topological domain" description="Extracellular" evidence="4">
    <location>
        <begin position="1001"/>
        <end position="1011"/>
    </location>
</feature>
<feature type="transmembrane region" description="Helical" evidence="6">
    <location>
        <begin position="1012"/>
        <end position="1032"/>
    </location>
</feature>
<feature type="topological domain" description="Cytoplasmic" evidence="4">
    <location>
        <begin position="1033"/>
        <end position="1321"/>
    </location>
</feature>
<feature type="domain" description="ABC transmembrane type-1 1" evidence="6">
    <location>
        <begin position="62"/>
        <end position="385"/>
    </location>
</feature>
<feature type="domain" description="ABC transporter 1" evidence="5">
    <location>
        <begin position="420"/>
        <end position="656"/>
    </location>
</feature>
<feature type="domain" description="ABC transmembrane type-1 2" evidence="6">
    <location>
        <begin position="755"/>
        <end position="1043"/>
    </location>
</feature>
<feature type="domain" description="ABC transporter 2" evidence="5">
    <location>
        <begin position="1078"/>
        <end position="1316"/>
    </location>
</feature>
<feature type="region of interest" description="Disordered" evidence="7">
    <location>
        <begin position="16"/>
        <end position="37"/>
    </location>
</feature>
<feature type="region of interest" description="Interaction with HAX1" evidence="1">
    <location>
        <begin position="651"/>
        <end position="672"/>
    </location>
</feature>
<feature type="region of interest" description="Mediates internalization from the plasma membrane" evidence="27">
    <location>
        <begin position="1311"/>
        <end position="1314"/>
    </location>
</feature>
<feature type="compositionally biased region" description="Basic and acidic residues" evidence="7">
    <location>
        <begin position="21"/>
        <end position="37"/>
    </location>
</feature>
<feature type="binding site" evidence="5">
    <location>
        <begin position="455"/>
        <end position="462"/>
    </location>
    <ligand>
        <name>ATP</name>
        <dbReference type="ChEBI" id="CHEBI:30616"/>
        <label>1</label>
    </ligand>
</feature>
<feature type="binding site" evidence="5">
    <location>
        <begin position="1113"/>
        <end position="1120"/>
    </location>
    <ligand>
        <name>ATP</name>
        <dbReference type="ChEBI" id="CHEBI:30616"/>
        <label>2</label>
    </ligand>
</feature>
<feature type="modified residue" description="Phosphothreonine" evidence="41">
    <location>
        <position position="586"/>
    </location>
</feature>
<feature type="modified residue" description="Phosphoserine" evidence="41">
    <location>
        <position position="587"/>
    </location>
</feature>
<feature type="modified residue" description="Phosphoserine" evidence="3">
    <location>
        <position position="690"/>
    </location>
</feature>
<feature type="modified residue" description="Phosphoserine" evidence="2">
    <location>
        <position position="701"/>
    </location>
</feature>
<feature type="modified residue" description="Phosphoserine" evidence="41">
    <location>
        <position position="704"/>
    </location>
</feature>
<feature type="modified residue" description="Phosphoserine" evidence="41">
    <location>
        <position position="1214"/>
    </location>
</feature>
<feature type="modified residue" description="Phosphoserine" evidence="2">
    <location>
        <position position="1321"/>
    </location>
</feature>
<feature type="glycosylation site" description="N-linked (GlcNAc...) asparagine" evidence="19">
    <location>
        <position position="109"/>
    </location>
</feature>
<feature type="glycosylation site" description="N-linked (GlcNAc...) asparagine" evidence="19">
    <location>
        <position position="116"/>
    </location>
</feature>
<feature type="glycosylation site" description="N-linked (GlcNAc...) asparagine" evidence="19">
    <location>
        <position position="122"/>
    </location>
</feature>
<feature type="glycosylation site" description="N-linked (GlcNAc...) asparagine" evidence="19">
    <location>
        <position position="125"/>
    </location>
</feature>
<feature type="sequence variant" id="VAR_055472" description="Does not affect taurocholate transport activity; does not affect cell surface protein expression; dbSNP:rs11568361." evidence="25">
    <original>S</original>
    <variation>L</variation>
    <location>
        <position position="56"/>
    </location>
</feature>
<feature type="sequence variant" id="VAR_083783" description="In PFIC2; loss of cell membrane localization; significantly reduces taurocholate transport activity; dbSNP:rs1695246652." evidence="30">
    <original>C</original>
    <variation>Y</variation>
    <location>
        <position position="129"/>
    </location>
</feature>
<feature type="sequence variant" id="VAR_030386" description="In BRIC2; dbSNP:rs72551307." evidence="12">
    <original>E</original>
    <variation>G</variation>
    <location>
        <position position="186"/>
    </location>
</feature>
<feature type="sequence variant" id="VAR_030387" description="Impairs taurocholate transport activity; does not affect protein expression; does not affect cell surface protein expression; does not affect cell membrane localization; dbSNP:rs11568357." evidence="17 25">
    <original>I</original>
    <variation>V</variation>
    <location>
        <position position="206"/>
    </location>
</feature>
<feature type="sequence variant" id="VAR_030388" description="In PFIC2; dbSNP:rs72551306." evidence="8">
    <original>G</original>
    <variation>V</variation>
    <location>
        <position position="238"/>
    </location>
</feature>
<feature type="sequence variant" id="VAR_035349" description="In dbSNP:rs200739891." evidence="17 20">
    <original>V</original>
    <variation>A</variation>
    <location>
        <position position="284"/>
    </location>
</feature>
<feature type="sequence variant" id="VAR_013332" description="In PFIC2." evidence="9">
    <original>V</original>
    <variation>L</variation>
    <location>
        <position position="284"/>
    </location>
</feature>
<feature type="sequence variant" id="VAR_010271" description="In PFIC2 and BRIC2; reduces transport capacity for taurocholate; decreases protein expression; affects maturation of protein in the endoplasmic reticulum; does not affect apical membrane localization; does not affect cell surface expression of the mature form; does not affect transport of taurocholate and glycocholate; enhances ubiquitination susceptibility; reduces transport activity of taurocholate in a low cholesterol environment; increases transport activity of taurocholate in a high cholesterol environment; does not affect protein expression; does not affect cell membrane localization; dbSNP:rs11568372." evidence="12 13 15 22 25 28 33">
    <original>E</original>
    <variation>G</variation>
    <location>
        <position position="297"/>
    </location>
</feature>
<feature type="sequence variant" id="VAR_030389" description="In dbSNP:rs2287617." evidence="17 31">
    <original>R</original>
    <variation>K</variation>
    <location>
        <position position="299"/>
    </location>
</feature>
<feature type="sequence variant" id="VAR_030390" description="In PFIC2; dbSNP:rs72551305." evidence="8">
    <original>C</original>
    <variation>S</variation>
    <location>
        <position position="336"/>
    </location>
</feature>
<feature type="sequence variant" id="VAR_073967" description="In PFIC2; uncertain significance." evidence="29">
    <original>Y</original>
    <variation>H</variation>
    <location>
        <position position="337"/>
    </location>
</feature>
<feature type="sequence variant" id="VAR_043074" description="In dbSNP:rs371656014." evidence="11">
    <original>R</original>
    <variation>Q</variation>
    <location>
        <position position="415"/>
    </location>
</feature>
<feature type="sequence variant" id="VAR_030391" description="In BRIC2; reduced transport capacity for taurocholate; reduces transport activity of taurocholate in a low cholesterol environment; increases transport activity of taurocholate in a high cholesterol environment; dbSNP:rs121908935." evidence="15 28">
    <original>R</original>
    <variation>T</variation>
    <location>
        <position position="432"/>
    </location>
</feature>
<feature type="sequence variant" id="VAR_013333" description="Does not affect transport capacity for taurocholate; increases transport activity of taurocholate in a low cholesterol environment; increases transport activity of taurocholate in a high cholesterol environment; does not affect cell surface protein expression; does not affect protein expression; dbSNP:rs2287622." evidence="10 11 17 18 20 25 28 29 31 34">
    <original>V</original>
    <variation>A</variation>
    <location>
        <position position="444"/>
    </location>
</feature>
<feature type="sequence variant" id="VAR_059106" description="In dbSNP:rs2287622.">
    <original>V</original>
    <variation>D</variation>
    <location>
        <position position="444"/>
    </location>
</feature>
<feature type="sequence variant" id="VAR_059107" description="In dbSNP:rs2287622.">
    <original>V</original>
    <variation>G</variation>
    <location>
        <position position="444"/>
    </location>
</feature>
<feature type="sequence variant" id="VAR_013334" description="In PFIC2; dbSNP:rs1274558905." evidence="33">
    <original>K</original>
    <variation>E</variation>
    <location>
        <position position="461"/>
    </location>
</feature>
<feature type="sequence variant" id="VAR_073968" description="In PFIC2; dbSNP:rs369860506." evidence="29">
    <original>Y</original>
    <variation>C</variation>
    <location>
        <position position="472"/>
    </location>
</feature>
<feature type="sequence variant" id="VAR_013335" description="In PFIC2; decreases protein expression; affects maturation of protein in the endoplasmic reticulum; decreases apical membrane localization; affects cell surface expression; does not affect transport of taurocholate and glycocholate; enhances ubiquitination susceptibility; dbSNP:rs72549402." evidence="13 22 33">
    <original>D</original>
    <variation>G</variation>
    <location>
        <position position="482"/>
    </location>
</feature>
<feature type="sequence variant" id="VAR_083784" description="Impairs taurocholate transport activity; does not affect protein expression; does not affect cell surface protein expression; does not affect cell membrane localization; dbSNP:rs11568369." evidence="25">
    <original>Q</original>
    <variation>H</variation>
    <location>
        <position position="558"/>
    </location>
</feature>
<feature type="sequence variant" id="VAR_030392" description="In BRIC2; dbSNP:rs886043807." evidence="12">
    <original>A</original>
    <variation>T</variation>
    <location>
        <position position="570"/>
    </location>
</feature>
<feature type="sequence variant" id="VAR_043075" description="In a patient with intrahepatic cholestasis of pregnancy; impairs taurocholate transport activity; does not affect protein expression; does not affect cell surface protein expression; does not affect cell membrane localization; dbSNP:rs11568367." evidence="11 25">
    <original>N</original>
    <variation>S</variation>
    <location>
        <position position="591"/>
    </location>
</feature>
<feature type="sequence variant" id="VAR_083785" description="Does not affect taurocholate transport activity; does not affect protein expression; does not affect cell surface protein expression; dbSNP:rs11568370." evidence="25">
    <original>E</original>
    <variation>Q</variation>
    <location>
        <position position="592"/>
    </location>
</feature>
<feature type="sequence variant" id="VAR_035350" evidence="17">
    <original>R</original>
    <variation>G</variation>
    <location>
        <position position="616"/>
    </location>
</feature>
<feature type="sequence variant" id="VAR_035351" description="In dbSNP:rs912519986." evidence="17">
    <original>T</original>
    <variation>A</variation>
    <location>
        <position position="619"/>
    </location>
</feature>
<feature type="sequence variant" id="VAR_043076" description="In fluvastatin-induced cholestasis; does not affect transport capacity for taurocholate." evidence="20">
    <original>D</original>
    <variation>Y</variation>
    <location>
        <position position="676"/>
    </location>
</feature>
<feature type="sequence variant" id="VAR_030393" description="Does not affect taurocholate transport activity; does not affect protein expression; does not affect cell surface protein expression; dbSNP:rs11568364." evidence="11 17 18 20 25">
    <original>M</original>
    <variation>V</variation>
    <location>
        <position position="677"/>
    </location>
</feature>
<feature type="sequence variant" id="VAR_073969" description="In PFIC2; uncertain significance; dbSNP:rs376216286." evidence="29">
    <original>R</original>
    <variation>W</variation>
    <location>
        <position position="696"/>
    </location>
</feature>
<feature type="sequence variant" id="VAR_035352" description="In dbSNP:rs138642043." evidence="17 20">
    <original>R</original>
    <variation>H</variation>
    <location>
        <position position="698"/>
    </location>
</feature>
<feature type="sequence variant" id="VAR_043077" description="In ethinylestradiol/gestodene-induced cholestasis; loss of transport capacity for taurocholate." evidence="20">
    <original>G</original>
    <variation>R</variation>
    <location>
        <position position="855"/>
    </location>
</feature>
<feature type="sequence variant" id="VAR_035353" description="Deacreases localization to the cell membrane; decreases the trafficking to the plasma membrane; dbSNP:rs118109635." evidence="17 29 31">
    <original>A</original>
    <variation>V</variation>
    <location>
        <position position="865"/>
    </location>
</feature>
<feature type="sequence variant" id="VAR_030394" description="In BRIC2; dbSNP:rs777469571." evidence="12">
    <original>T</original>
    <variation>P</variation>
    <location>
        <position position="923"/>
    </location>
</feature>
<feature type="sequence variant" id="VAR_030395" description="In BRIC2; dbSNP:rs72549400." evidence="12">
    <original>A</original>
    <variation>P</variation>
    <location>
        <position position="926"/>
    </location>
</feature>
<feature type="sequence variant" id="VAR_073970" description="In PFIC2; uncertain significance." evidence="29">
    <original>Q</original>
    <variation>P</variation>
    <location>
        <position position="931"/>
    </location>
</feature>
<feature type="sequence variant" id="VAR_035354" description="In dbSNP:rs761363245." evidence="17">
    <original>R</original>
    <variation>Q</variation>
    <location>
        <position position="958"/>
    </location>
</feature>
<feature type="sequence variant" id="VAR_013336" description="In PFIC2; impairs taurocholate transport activity; significantly reduces protein expression; decreases cell surface protein expression; loss of ell membrane localization; dbSNP:rs72549399." evidence="25 33">
    <original>G</original>
    <variation>R</variation>
    <location>
        <position position="982"/>
    </location>
</feature>
<feature type="sequence variant" id="VAR_013337" description="In PFIC2." evidence="9">
    <original>G</original>
    <variation>D</variation>
    <location>
        <position position="1004"/>
    </location>
</feature>
<feature type="sequence variant" id="VAR_030396" description="In BRIC2; dbSNP:rs72549398." evidence="12">
    <original>R</original>
    <variation>C</variation>
    <location>
        <position position="1050"/>
    </location>
</feature>
<feature type="sequence variant" id="VAR_030397" description="In BRIC2; dbSNP:rs756220860." evidence="12">
    <original>R</original>
    <variation>H</variation>
    <location>
        <position position="1128"/>
    </location>
</feature>
<feature type="sequence variant" id="VAR_073971" description="In PFIC2." evidence="29">
    <original>D</original>
    <variation>V</variation>
    <location>
        <position position="1131"/>
    </location>
</feature>
<feature type="sequence variant" id="VAR_013338" description="In PFIC2; impairs taurocholate transport activity; significantly reduces protein expression; decreases cell surface protein expression; loss of ell membrane localization; dbSNP:rs72549395." evidence="25 33">
    <original>R</original>
    <variation>C</variation>
    <location>
        <position position="1153"/>
    </location>
</feature>
<feature type="sequence variant" id="VAR_030398" description="Impairs taurocholate transport activity; does not affect protein expression; decreases cell surface protein expression; reduces plasma membrane localization; dbSNP:rs1521808." evidence="25">
    <original>E</original>
    <variation>K</variation>
    <location>
        <position position="1186"/>
    </location>
</feature>
<feature type="sequence variant" id="VAR_073972" description="In PFIC2; uncertain significance." evidence="29">
    <original>H</original>
    <variation>R</variation>
    <location>
        <position position="1198"/>
    </location>
</feature>
<feature type="sequence variant" id="VAR_013339" description="In PFIC2; dbSNP:rs72549394." evidence="33">
    <original>R</original>
    <variation>Q</variation>
    <location>
        <position position="1268"/>
    </location>
</feature>
<feature type="mutagenesis site" description="Does not affect ATPase-coupled bile acid transport activity. Decreases protein stability." evidence="32">
    <location>
        <begin position="1"/>
        <end position="441"/>
    </location>
</feature>
<feature type="mutagenesis site" description="Loss of interaction with AP2A1 and AP2A2. Promotes ABCB11 plasma membrane trafficking. Does not affect plasma membrane localization. Inhibits ABCB11 internalization." evidence="27">
    <original>Y</original>
    <variation>A</variation>
    <location>
        <position position="1311"/>
    </location>
</feature>
<feature type="sequence conflict" description="In Ref. 1; AAC77455." evidence="36" ref="1">
    <original>L</original>
    <variation>V</variation>
    <location>
        <position position="339"/>
    </location>
</feature>
<feature type="helix" evidence="44">
    <location>
        <begin position="47"/>
        <end position="49"/>
    </location>
</feature>
<feature type="turn" evidence="44">
    <location>
        <begin position="50"/>
        <end position="53"/>
    </location>
</feature>
<feature type="helix" evidence="44">
    <location>
        <begin position="56"/>
        <end position="99"/>
    </location>
</feature>
<feature type="turn" evidence="42">
    <location>
        <begin position="105"/>
        <end position="107"/>
    </location>
</feature>
<feature type="strand" evidence="42">
    <location>
        <begin position="111"/>
        <end position="115"/>
    </location>
</feature>
<feature type="strand" evidence="42">
    <location>
        <begin position="119"/>
        <end position="121"/>
    </location>
</feature>
<feature type="turn" evidence="42">
    <location>
        <begin position="126"/>
        <end position="129"/>
    </location>
</feature>
<feature type="helix" evidence="44">
    <location>
        <begin position="135"/>
        <end position="184"/>
    </location>
</feature>
<feature type="helix" evidence="44">
    <location>
        <begin position="187"/>
        <end position="192"/>
    </location>
</feature>
<feature type="helix" evidence="44">
    <location>
        <begin position="195"/>
        <end position="213"/>
    </location>
</feature>
<feature type="helix" evidence="44">
    <location>
        <begin position="216"/>
        <end position="236"/>
    </location>
</feature>
<feature type="strand" evidence="44">
    <location>
        <begin position="237"/>
        <end position="241"/>
    </location>
</feature>
<feature type="helix" evidence="44">
    <location>
        <begin position="245"/>
        <end position="286"/>
    </location>
</feature>
<feature type="helix" evidence="44">
    <location>
        <begin position="288"/>
        <end position="293"/>
    </location>
</feature>
<feature type="helix" evidence="44">
    <location>
        <begin position="297"/>
        <end position="343"/>
    </location>
</feature>
<feature type="helix" evidence="42">
    <location>
        <begin position="344"/>
        <end position="348"/>
    </location>
</feature>
<feature type="turn" evidence="42">
    <location>
        <begin position="349"/>
        <end position="352"/>
    </location>
</feature>
<feature type="helix" evidence="44">
    <location>
        <begin position="356"/>
        <end position="375"/>
    </location>
</feature>
<feature type="helix" evidence="44">
    <location>
        <begin position="377"/>
        <end position="397"/>
    </location>
</feature>
<feature type="strand" evidence="42">
    <location>
        <begin position="407"/>
        <end position="410"/>
    </location>
</feature>
<feature type="strand" evidence="44">
    <location>
        <begin position="420"/>
        <end position="427"/>
    </location>
</feature>
<feature type="strand" evidence="42">
    <location>
        <begin position="430"/>
        <end position="432"/>
    </location>
</feature>
<feature type="strand" evidence="44">
    <location>
        <begin position="438"/>
        <end position="441"/>
    </location>
</feature>
<feature type="strand" evidence="44">
    <location>
        <begin position="449"/>
        <end position="454"/>
    </location>
</feature>
<feature type="helix" evidence="44">
    <location>
        <begin position="461"/>
        <end position="468"/>
    </location>
</feature>
<feature type="strand" evidence="44">
    <location>
        <begin position="475"/>
        <end position="481"/>
    </location>
</feature>
<feature type="helix" evidence="44">
    <location>
        <begin position="486"/>
        <end position="488"/>
    </location>
</feature>
<feature type="helix" evidence="44">
    <location>
        <begin position="491"/>
        <end position="495"/>
    </location>
</feature>
<feature type="strand" evidence="44">
    <location>
        <begin position="498"/>
        <end position="501"/>
    </location>
</feature>
<feature type="strand" evidence="44">
    <location>
        <begin position="509"/>
        <end position="511"/>
    </location>
</feature>
<feature type="helix" evidence="44">
    <location>
        <begin position="512"/>
        <end position="517"/>
    </location>
</feature>
<feature type="helix" evidence="44">
    <location>
        <begin position="525"/>
        <end position="534"/>
    </location>
</feature>
<feature type="helix" evidence="44">
    <location>
        <begin position="538"/>
        <end position="542"/>
    </location>
</feature>
<feature type="strand" evidence="44">
    <location>
        <begin position="543"/>
        <end position="546"/>
    </location>
</feature>
<feature type="turn" evidence="44">
    <location>
        <begin position="547"/>
        <end position="549"/>
    </location>
</feature>
<feature type="helix" evidence="44">
    <location>
        <begin position="554"/>
        <end position="556"/>
    </location>
</feature>
<feature type="helix" evidence="44">
    <location>
        <begin position="561"/>
        <end position="573"/>
    </location>
</feature>
<feature type="strand" evidence="44">
    <location>
        <begin position="578"/>
        <end position="584"/>
    </location>
</feature>
<feature type="turn" evidence="44">
    <location>
        <begin position="585"/>
        <end position="588"/>
    </location>
</feature>
<feature type="helix" evidence="44">
    <location>
        <begin position="591"/>
        <end position="604"/>
    </location>
</feature>
<feature type="turn" evidence="44">
    <location>
        <begin position="605"/>
        <end position="607"/>
    </location>
</feature>
<feature type="strand" evidence="44">
    <location>
        <begin position="608"/>
        <end position="613"/>
    </location>
</feature>
<feature type="helix" evidence="44">
    <location>
        <begin position="617"/>
        <end position="620"/>
    </location>
</feature>
<feature type="strand" evidence="44">
    <location>
        <begin position="624"/>
        <end position="632"/>
    </location>
</feature>
<feature type="strand" evidence="44">
    <location>
        <begin position="634"/>
        <end position="636"/>
    </location>
</feature>
<feature type="turn" evidence="42">
    <location>
        <begin position="641"/>
        <end position="645"/>
    </location>
</feature>
<feature type="turn" evidence="42">
    <location>
        <begin position="648"/>
        <end position="652"/>
    </location>
</feature>
<feature type="helix" evidence="42">
    <location>
        <begin position="653"/>
        <end position="655"/>
    </location>
</feature>
<feature type="turn" evidence="42">
    <location>
        <begin position="688"/>
        <end position="700"/>
    </location>
</feature>
<feature type="helix" evidence="42">
    <location>
        <begin position="701"/>
        <end position="703"/>
    </location>
</feature>
<feature type="strand" evidence="42">
    <location>
        <begin position="704"/>
        <end position="706"/>
    </location>
</feature>
<feature type="strand" evidence="42">
    <location>
        <begin position="711"/>
        <end position="714"/>
    </location>
</feature>
<feature type="helix" evidence="44">
    <location>
        <begin position="740"/>
        <end position="747"/>
    </location>
</feature>
<feature type="helix" evidence="43">
    <location>
        <begin position="748"/>
        <end position="751"/>
    </location>
</feature>
<feature type="helix" evidence="44">
    <location>
        <begin position="752"/>
        <end position="780"/>
    </location>
</feature>
<feature type="helix" evidence="43">
    <location>
        <begin position="782"/>
        <end position="784"/>
    </location>
</feature>
<feature type="helix" evidence="44">
    <location>
        <begin position="794"/>
        <end position="840"/>
    </location>
</feature>
<feature type="helix" evidence="44">
    <location>
        <begin position="844"/>
        <end position="847"/>
    </location>
</feature>
<feature type="strand" evidence="43">
    <location>
        <begin position="848"/>
        <end position="852"/>
    </location>
</feature>
<feature type="helix" evidence="44">
    <location>
        <begin position="854"/>
        <end position="872"/>
    </location>
</feature>
<feature type="helix" evidence="44">
    <location>
        <begin position="875"/>
        <end position="894"/>
    </location>
</feature>
<feature type="helix" evidence="44">
    <location>
        <begin position="898"/>
        <end position="905"/>
    </location>
</feature>
<feature type="helix" evidence="44">
    <location>
        <begin position="908"/>
        <end position="945"/>
    </location>
</feature>
<feature type="helix" evidence="44">
    <location>
        <begin position="947"/>
        <end position="953"/>
    </location>
</feature>
<feature type="helix" evidence="44">
    <location>
        <begin position="956"/>
        <end position="967"/>
    </location>
</feature>
<feature type="helix" evidence="44">
    <location>
        <begin position="969"/>
        <end position="1009"/>
    </location>
</feature>
<feature type="helix" evidence="44">
    <location>
        <begin position="1014"/>
        <end position="1027"/>
    </location>
</feature>
<feature type="helix" evidence="44">
    <location>
        <begin position="1030"/>
        <end position="1032"/>
    </location>
</feature>
<feature type="strand" evidence="44">
    <location>
        <begin position="1035"/>
        <end position="1037"/>
    </location>
</feature>
<feature type="helix" evidence="44">
    <location>
        <begin position="1038"/>
        <end position="1055"/>
    </location>
</feature>
<feature type="strand" evidence="44">
    <location>
        <begin position="1078"/>
        <end position="1086"/>
    </location>
</feature>
<feature type="strand" evidence="44">
    <location>
        <begin position="1094"/>
        <end position="1099"/>
    </location>
</feature>
<feature type="strand" evidence="44">
    <location>
        <begin position="1108"/>
        <end position="1112"/>
    </location>
</feature>
<feature type="helix" evidence="44">
    <location>
        <begin position="1119"/>
        <end position="1126"/>
    </location>
</feature>
<feature type="strand" evidence="42">
    <location>
        <begin position="1127"/>
        <end position="1130"/>
    </location>
</feature>
<feature type="strand" evidence="44">
    <location>
        <begin position="1133"/>
        <end position="1139"/>
    </location>
</feature>
<feature type="strand" evidence="43">
    <location>
        <begin position="1140"/>
        <end position="1142"/>
    </location>
</feature>
<feature type="turn" evidence="44">
    <location>
        <begin position="1144"/>
        <end position="1146"/>
    </location>
</feature>
<feature type="helix" evidence="44">
    <location>
        <begin position="1149"/>
        <end position="1154"/>
    </location>
</feature>
<feature type="strand" evidence="44">
    <location>
        <begin position="1156"/>
        <end position="1159"/>
    </location>
</feature>
<feature type="strand" evidence="44">
    <location>
        <begin position="1167"/>
        <end position="1169"/>
    </location>
</feature>
<feature type="helix" evidence="44">
    <location>
        <begin position="1170"/>
        <end position="1175"/>
    </location>
</feature>
<feature type="strand" evidence="42">
    <location>
        <begin position="1179"/>
        <end position="1181"/>
    </location>
</feature>
<feature type="helix" evidence="44">
    <location>
        <begin position="1185"/>
        <end position="1194"/>
    </location>
</feature>
<feature type="helix" evidence="44">
    <location>
        <begin position="1198"/>
        <end position="1202"/>
    </location>
</feature>
<feature type="strand" evidence="44">
    <location>
        <begin position="1204"/>
        <end position="1206"/>
    </location>
</feature>
<feature type="turn" evidence="44">
    <location>
        <begin position="1207"/>
        <end position="1209"/>
    </location>
</feature>
<feature type="helix" evidence="44">
    <location>
        <begin position="1214"/>
        <end position="1216"/>
    </location>
</feature>
<feature type="helix" evidence="44">
    <location>
        <begin position="1221"/>
        <end position="1233"/>
    </location>
</feature>
<feature type="strand" evidence="44">
    <location>
        <begin position="1238"/>
        <end position="1244"/>
    </location>
</feature>
<feature type="strand" evidence="44">
    <location>
        <begin position="1254"/>
        <end position="1256"/>
    </location>
</feature>
<feature type="helix" evidence="44">
    <location>
        <begin position="1257"/>
        <end position="1265"/>
    </location>
</feature>
<feature type="strand" evidence="44">
    <location>
        <begin position="1268"/>
        <end position="1273"/>
    </location>
</feature>
<feature type="turn" evidence="44">
    <location>
        <begin position="1277"/>
        <end position="1282"/>
    </location>
</feature>
<feature type="strand" evidence="44">
    <location>
        <begin position="1284"/>
        <end position="1290"/>
    </location>
</feature>
<feature type="strand" evidence="44">
    <location>
        <begin position="1293"/>
        <end position="1298"/>
    </location>
</feature>
<feature type="helix" evidence="44">
    <location>
        <begin position="1300"/>
        <end position="1306"/>
    </location>
</feature>
<feature type="helix" evidence="44">
    <location>
        <begin position="1309"/>
        <end position="1315"/>
    </location>
</feature>